<name>KR108_HUMAN</name>
<dbReference type="EMBL" id="AB076355">
    <property type="protein sequence ID" value="BAD01542.1"/>
    <property type="molecule type" value="mRNA"/>
</dbReference>
<dbReference type="EMBL" id="AL773602">
    <property type="status" value="NOT_ANNOTATED_CDS"/>
    <property type="molecule type" value="Genomic_DNA"/>
</dbReference>
<dbReference type="EMBL" id="BC127016">
    <property type="protein sequence ID" value="AAI27017.1"/>
    <property type="molecule type" value="mRNA"/>
</dbReference>
<dbReference type="CCDS" id="CCDS13713.1"/>
<dbReference type="RefSeq" id="NP_941968.2">
    <property type="nucleotide sequence ID" value="NM_198695.2"/>
</dbReference>
<dbReference type="BioGRID" id="132132">
    <property type="interactions" value="401"/>
</dbReference>
<dbReference type="FunCoup" id="P60410">
    <property type="interactions" value="51"/>
</dbReference>
<dbReference type="IntAct" id="P60410">
    <property type="interactions" value="386"/>
</dbReference>
<dbReference type="STRING" id="9606.ENSP00000335565"/>
<dbReference type="iPTMnet" id="P60410"/>
<dbReference type="PhosphoSitePlus" id="P60410"/>
<dbReference type="BioMuta" id="KRTAP10-8"/>
<dbReference type="DMDM" id="116242612"/>
<dbReference type="MassIVE" id="P60410"/>
<dbReference type="PaxDb" id="9606-ENSP00000335565"/>
<dbReference type="PeptideAtlas" id="P60410"/>
<dbReference type="DNASU" id="386681"/>
<dbReference type="Ensembl" id="ENST00000334662.2">
    <property type="protein sequence ID" value="ENSP00000335565.2"/>
    <property type="gene ID" value="ENSG00000187766.1"/>
</dbReference>
<dbReference type="GeneID" id="386681"/>
<dbReference type="KEGG" id="hsa:386681"/>
<dbReference type="MANE-Select" id="ENST00000334662.2">
    <property type="protein sequence ID" value="ENSP00000335565.2"/>
    <property type="RefSeq nucleotide sequence ID" value="NM_198695.2"/>
    <property type="RefSeq protein sequence ID" value="NP_941968.2"/>
</dbReference>
<dbReference type="UCSC" id="uc002zfo.1">
    <property type="organism name" value="human"/>
</dbReference>
<dbReference type="AGR" id="HGNC:20525"/>
<dbReference type="CTD" id="386681"/>
<dbReference type="GeneCards" id="KRTAP10-8"/>
<dbReference type="HGNC" id="HGNC:20525">
    <property type="gene designation" value="KRTAP10-8"/>
</dbReference>
<dbReference type="HPA" id="ENSG00000187766">
    <property type="expression patterns" value="Tissue enriched (skin)"/>
</dbReference>
<dbReference type="neXtProt" id="NX_P60410"/>
<dbReference type="OpenTargets" id="ENSG00000187766"/>
<dbReference type="PharmGKB" id="PA134968895"/>
<dbReference type="VEuPathDB" id="HostDB:ENSG00000187766"/>
<dbReference type="eggNOG" id="KOG4726">
    <property type="taxonomic scope" value="Eukaryota"/>
</dbReference>
<dbReference type="GeneTree" id="ENSGT00940000163258"/>
<dbReference type="HOGENOM" id="CLU_062832_0_0_1"/>
<dbReference type="InParanoid" id="P60410"/>
<dbReference type="OMA" id="ICCKPIY"/>
<dbReference type="PAN-GO" id="P60410">
    <property type="GO annotations" value="0 GO annotations based on evolutionary models"/>
</dbReference>
<dbReference type="PhylomeDB" id="P60410"/>
<dbReference type="TreeFam" id="TF351356"/>
<dbReference type="PathwayCommons" id="P60410"/>
<dbReference type="Reactome" id="R-HSA-6805567">
    <property type="pathway name" value="Keratinization"/>
</dbReference>
<dbReference type="SignaLink" id="P60410"/>
<dbReference type="BioGRID-ORCS" id="386681">
    <property type="hits" value="17 hits in 1116 CRISPR screens"/>
</dbReference>
<dbReference type="GenomeRNAi" id="386681"/>
<dbReference type="Pharos" id="P60410">
    <property type="development level" value="Tdark"/>
</dbReference>
<dbReference type="PRO" id="PR:P60410"/>
<dbReference type="Proteomes" id="UP000005640">
    <property type="component" value="Chromosome 21"/>
</dbReference>
<dbReference type="RNAct" id="P60410">
    <property type="molecule type" value="protein"/>
</dbReference>
<dbReference type="Bgee" id="ENSG00000187766">
    <property type="expression patterns" value="Expressed in skin of abdomen and 3 other cell types or tissues"/>
</dbReference>
<dbReference type="GO" id="GO:0005829">
    <property type="term" value="C:cytosol"/>
    <property type="evidence" value="ECO:0000304"/>
    <property type="project" value="Reactome"/>
</dbReference>
<dbReference type="GO" id="GO:0045095">
    <property type="term" value="C:keratin filament"/>
    <property type="evidence" value="ECO:0007669"/>
    <property type="project" value="InterPro"/>
</dbReference>
<dbReference type="GO" id="GO:0042802">
    <property type="term" value="F:identical protein binding"/>
    <property type="evidence" value="ECO:0000353"/>
    <property type="project" value="IntAct"/>
</dbReference>
<dbReference type="InterPro" id="IPR002494">
    <property type="entry name" value="KAP"/>
</dbReference>
<dbReference type="PANTHER" id="PTHR23262">
    <property type="entry name" value="KERATIN ASSOCIATED PROTEIN"/>
    <property type="match status" value="1"/>
</dbReference>
<dbReference type="PANTHER" id="PTHR23262:SF149">
    <property type="entry name" value="KERATIN-ASSOCIATED PROTEIN 10-8"/>
    <property type="match status" value="1"/>
</dbReference>
<dbReference type="Pfam" id="PF13885">
    <property type="entry name" value="Keratin_B2_2"/>
    <property type="match status" value="3"/>
</dbReference>
<organism>
    <name type="scientific">Homo sapiens</name>
    <name type="common">Human</name>
    <dbReference type="NCBI Taxonomy" id="9606"/>
    <lineage>
        <taxon>Eukaryota</taxon>
        <taxon>Metazoa</taxon>
        <taxon>Chordata</taxon>
        <taxon>Craniata</taxon>
        <taxon>Vertebrata</taxon>
        <taxon>Euteleostomi</taxon>
        <taxon>Mammalia</taxon>
        <taxon>Eutheria</taxon>
        <taxon>Euarchontoglires</taxon>
        <taxon>Primates</taxon>
        <taxon>Haplorrhini</taxon>
        <taxon>Catarrhini</taxon>
        <taxon>Hominidae</taxon>
        <taxon>Homo</taxon>
    </lineage>
</organism>
<accession>P60410</accession>
<accession>A0JNW4</accession>
<feature type="chain" id="PRO_0000185216" description="Keratin-associated protein 10-8">
    <location>
        <begin position="1"/>
        <end position="259"/>
    </location>
</feature>
<feature type="repeat" description="1">
    <location>
        <begin position="50"/>
        <end position="54"/>
    </location>
</feature>
<feature type="repeat" description="2">
    <location>
        <begin position="60"/>
        <end position="64"/>
    </location>
</feature>
<feature type="repeat" description="3">
    <location>
        <begin position="65"/>
        <end position="69"/>
    </location>
</feature>
<feature type="repeat" description="4">
    <location>
        <begin position="98"/>
        <end position="102"/>
    </location>
</feature>
<feature type="repeat" description="5">
    <location>
        <begin position="108"/>
        <end position="112"/>
    </location>
</feature>
<feature type="repeat" description="6">
    <location>
        <begin position="118"/>
        <end position="122"/>
    </location>
</feature>
<feature type="repeat" description="7">
    <location>
        <begin position="123"/>
        <end position="127"/>
    </location>
</feature>
<feature type="repeat" description="8">
    <location>
        <begin position="133"/>
        <end position="137"/>
    </location>
</feature>
<feature type="repeat" description="9">
    <location>
        <begin position="145"/>
        <end position="149"/>
    </location>
</feature>
<feature type="repeat" description="10">
    <location>
        <begin position="155"/>
        <end position="159"/>
    </location>
</feature>
<feature type="repeat" description="11">
    <location>
        <begin position="165"/>
        <end position="169"/>
    </location>
</feature>
<feature type="repeat" description="12">
    <location>
        <begin position="170"/>
        <end position="174"/>
    </location>
</feature>
<feature type="repeat" description="13">
    <location>
        <begin position="175"/>
        <end position="179"/>
    </location>
</feature>
<feature type="repeat" description="14">
    <location>
        <begin position="187"/>
        <end position="191"/>
    </location>
</feature>
<feature type="repeat" description="15">
    <location>
        <begin position="197"/>
        <end position="201"/>
    </location>
</feature>
<feature type="repeat" description="16">
    <location>
        <begin position="202"/>
        <end position="206"/>
    </location>
</feature>
<feature type="repeat" description="17">
    <location>
        <begin position="221"/>
        <end position="225"/>
    </location>
</feature>
<feature type="repeat" description="18">
    <location>
        <begin position="228"/>
        <end position="232"/>
    </location>
</feature>
<feature type="repeat" description="19">
    <location>
        <begin position="239"/>
        <end position="243"/>
    </location>
</feature>
<feature type="region of interest" description="19 X 5 AA repeats of C-C-X(3)">
    <location>
        <begin position="26"/>
        <end position="243"/>
    </location>
</feature>
<feature type="sequence variant" id="VAR_028234" description="In dbSNP:rs411254." evidence="2 3">
    <original>H</original>
    <variation>R</variation>
    <location>
        <position position="26"/>
    </location>
</feature>
<feature type="sequence variant" id="VAR_036560" description="In a colorectal cancer sample; somatic mutation." evidence="4">
    <original>S</original>
    <variation>N</variation>
    <location>
        <position position="64"/>
    </location>
</feature>
<feature type="sequence variant" id="VAR_036561" description="In a breast cancer sample; somatic mutation; dbSNP:rs763238933." evidence="4">
    <original>S</original>
    <variation>F</variation>
    <location>
        <position position="159"/>
    </location>
</feature>
<reference key="1">
    <citation type="journal article" date="2004" name="Genomics">
        <title>A cluster of 21 keratin-associated protein genes within introns of another gene on human chromosome 21q22.3.</title>
        <authorList>
            <person name="Shibuya K."/>
            <person name="Obayashi I."/>
            <person name="Asakawa S."/>
            <person name="Minoshima S."/>
            <person name="Kudoh J."/>
            <person name="Shimizu N."/>
        </authorList>
    </citation>
    <scope>NUCLEOTIDE SEQUENCE [MRNA]</scope>
    <scope>TISSUE SPECIFICITY</scope>
    <scope>VARIANT ARG-26</scope>
    <source>
        <tissue>Hair root</tissue>
    </source>
</reference>
<reference key="2">
    <citation type="journal article" date="2000" name="Nature">
        <title>The DNA sequence of human chromosome 21.</title>
        <authorList>
            <person name="Hattori M."/>
            <person name="Fujiyama A."/>
            <person name="Taylor T.D."/>
            <person name="Watanabe H."/>
            <person name="Yada T."/>
            <person name="Park H.-S."/>
            <person name="Toyoda A."/>
            <person name="Ishii K."/>
            <person name="Totoki Y."/>
            <person name="Choi D.-K."/>
            <person name="Groner Y."/>
            <person name="Soeda E."/>
            <person name="Ohki M."/>
            <person name="Takagi T."/>
            <person name="Sakaki Y."/>
            <person name="Taudien S."/>
            <person name="Blechschmidt K."/>
            <person name="Polley A."/>
            <person name="Menzel U."/>
            <person name="Delabar J."/>
            <person name="Kumpf K."/>
            <person name="Lehmann R."/>
            <person name="Patterson D."/>
            <person name="Reichwald K."/>
            <person name="Rump A."/>
            <person name="Schillhabel M."/>
            <person name="Schudy A."/>
            <person name="Zimmermann W."/>
            <person name="Rosenthal A."/>
            <person name="Kudoh J."/>
            <person name="Shibuya K."/>
            <person name="Kawasaki K."/>
            <person name="Asakawa S."/>
            <person name="Shintani A."/>
            <person name="Sasaki T."/>
            <person name="Nagamine K."/>
            <person name="Mitsuyama S."/>
            <person name="Antonarakis S.E."/>
            <person name="Minoshima S."/>
            <person name="Shimizu N."/>
            <person name="Nordsiek G."/>
            <person name="Hornischer K."/>
            <person name="Brandt P."/>
            <person name="Scharfe M."/>
            <person name="Schoen O."/>
            <person name="Desario A."/>
            <person name="Reichelt J."/>
            <person name="Kauer G."/>
            <person name="Bloecker H."/>
            <person name="Ramser J."/>
            <person name="Beck A."/>
            <person name="Klages S."/>
            <person name="Hennig S."/>
            <person name="Riesselmann L."/>
            <person name="Dagand E."/>
            <person name="Wehrmeyer S."/>
            <person name="Borzym K."/>
            <person name="Gardiner K."/>
            <person name="Nizetic D."/>
            <person name="Francis F."/>
            <person name="Lehrach H."/>
            <person name="Reinhardt R."/>
            <person name="Yaspo M.-L."/>
        </authorList>
    </citation>
    <scope>NUCLEOTIDE SEQUENCE [LARGE SCALE GENOMIC DNA]</scope>
</reference>
<reference key="3">
    <citation type="journal article" date="2004" name="Genome Res.">
        <title>The status, quality, and expansion of the NIH full-length cDNA project: the Mammalian Gene Collection (MGC).</title>
        <authorList>
            <consortium name="The MGC Project Team"/>
        </authorList>
    </citation>
    <scope>NUCLEOTIDE SEQUENCE [LARGE SCALE MRNA]</scope>
    <scope>VARIANT ARG-26</scope>
</reference>
<reference key="4">
    <citation type="journal article" date="2004" name="J. Invest. Dermatol.">
        <title>Hair keratin associated proteins: characterization of a second high sulfur KAP gene domain on human chromosome 21.</title>
        <authorList>
            <person name="Rogers M.A."/>
            <person name="Langbein L."/>
            <person name="Winter H."/>
            <person name="Beckmann I."/>
            <person name="Praetzel S."/>
            <person name="Schweizer J."/>
        </authorList>
    </citation>
    <scope>TISSUE SPECIFICITY</scope>
</reference>
<reference key="5">
    <citation type="journal article" date="2006" name="Science">
        <title>The consensus coding sequences of human breast and colorectal cancers.</title>
        <authorList>
            <person name="Sjoeblom T."/>
            <person name="Jones S."/>
            <person name="Wood L.D."/>
            <person name="Parsons D.W."/>
            <person name="Lin J."/>
            <person name="Barber T.D."/>
            <person name="Mandelker D."/>
            <person name="Leary R.J."/>
            <person name="Ptak J."/>
            <person name="Silliman N."/>
            <person name="Szabo S."/>
            <person name="Buckhaults P."/>
            <person name="Farrell C."/>
            <person name="Meeh P."/>
            <person name="Markowitz S.D."/>
            <person name="Willis J."/>
            <person name="Dawson D."/>
            <person name="Willson J.K.V."/>
            <person name="Gazdar A.F."/>
            <person name="Hartigan J."/>
            <person name="Wu L."/>
            <person name="Liu C."/>
            <person name="Parmigiani G."/>
            <person name="Park B.H."/>
            <person name="Bachman K.E."/>
            <person name="Papadopoulos N."/>
            <person name="Vogelstein B."/>
            <person name="Kinzler K.W."/>
            <person name="Velculescu V.E."/>
        </authorList>
    </citation>
    <scope>VARIANTS [LARGE SCALE ANALYSIS] ASN-64 AND PHE-159</scope>
</reference>
<keyword id="KW-0416">Keratin</keyword>
<keyword id="KW-1267">Proteomics identification</keyword>
<keyword id="KW-1185">Reference proteome</keyword>
<keyword id="KW-0677">Repeat</keyword>
<comment type="function">
    <text>In the hair cortex, hair keratin intermediate filaments are embedded in an interfilamentous matrix, consisting of hair keratin-associated proteins (KRTAP), which are essential for the formation of a rigid and resistant hair shaft through their extensive disulfide bond cross-linking with abundant cysteine residues of hair keratins. The matrix proteins include the high-sulfur and high-glycine-tyrosine keratins.</text>
</comment>
<comment type="subunit">
    <text>Interacts with hair keratins.</text>
</comment>
<comment type="interaction">
    <interactant intactId="EBI-10171774">
        <id>P60410</id>
    </interactant>
    <interactant intactId="EBI-3916242">
        <id>Q96HD9</id>
        <label>ACY3</label>
    </interactant>
    <organismsDiffer>false</organismsDiffer>
    <experiments>3</experiments>
</comment>
<comment type="interaction">
    <interactant intactId="EBI-10171774">
        <id>P60410</id>
    </interactant>
    <interactant intactId="EBI-12006944">
        <id>O43184-4</id>
        <label>ADAM12</label>
    </interactant>
    <organismsDiffer>false</organismsDiffer>
    <experiments>5</experiments>
</comment>
<comment type="interaction">
    <interactant intactId="EBI-10171774">
        <id>P60410</id>
    </interactant>
    <interactant intactId="EBI-2511802">
        <id>Q9UHI8</id>
        <label>ADAMTS1</label>
    </interactant>
    <organismsDiffer>false</organismsDiffer>
    <experiments>3</experiments>
</comment>
<comment type="interaction">
    <interactant intactId="EBI-10171774">
        <id>P60410</id>
    </interactant>
    <interactant intactId="EBI-10221726">
        <id>P82987</id>
        <label>ADAMTSL3</label>
    </interactant>
    <organismsDiffer>false</organismsDiffer>
    <experiments>6</experiments>
</comment>
<comment type="interaction">
    <interactant intactId="EBI-10171774">
        <id>P60410</id>
    </interactant>
    <interactant intactId="EBI-10173507">
        <id>Q6UY14-3</id>
        <label>ADAMTSL4</label>
    </interactant>
    <organismsDiffer>false</organismsDiffer>
    <experiments>6</experiments>
</comment>
<comment type="interaction">
    <interactant intactId="EBI-10171774">
        <id>P60410</id>
    </interactant>
    <interactant intactId="EBI-10255023">
        <id>Q6ZN18-2</id>
        <label>AEBP2</label>
    </interactant>
    <organismsDiffer>false</organismsDiffer>
    <experiments>3</experiments>
</comment>
<comment type="interaction">
    <interactant intactId="EBI-10171774">
        <id>P60410</id>
    </interactant>
    <interactant intactId="EBI-8637627">
        <id>Q8WTP8</id>
        <label>AEN</label>
    </interactant>
    <organismsDiffer>false</organismsDiffer>
    <experiments>3</experiments>
</comment>
<comment type="interaction">
    <interactant intactId="EBI-10171774">
        <id>P60410</id>
    </interactant>
    <interactant intactId="EBI-3916527">
        <id>Q9UIJ7</id>
        <label>AK3</label>
    </interactant>
    <organismsDiffer>false</organismsDiffer>
    <experiments>3</experiments>
</comment>
<comment type="interaction">
    <interactant intactId="EBI-10171774">
        <id>P60410</id>
    </interactant>
    <interactant intactId="EBI-2558314">
        <id>P43353</id>
        <label>ALDH3B1</label>
    </interactant>
    <organismsDiffer>false</organismsDiffer>
    <experiments>6</experiments>
</comment>
<comment type="interaction">
    <interactant intactId="EBI-10171774">
        <id>P60410</id>
    </interactant>
    <interactant intactId="EBI-1052631">
        <id>P09923</id>
        <label>ALPI</label>
    </interactant>
    <organismsDiffer>false</organismsDiffer>
    <experiments>3</experiments>
</comment>
<comment type="interaction">
    <interactant intactId="EBI-10171774">
        <id>P60410</id>
    </interactant>
    <interactant intactId="EBI-1211484">
        <id>P05187</id>
        <label>ALPP</label>
    </interactant>
    <organismsDiffer>false</organismsDiffer>
    <experiments>3</experiments>
</comment>
<comment type="interaction">
    <interactant intactId="EBI-10171774">
        <id>P60410</id>
    </interactant>
    <interactant intactId="EBI-8583355">
        <id>Q9Y4X0</id>
        <label>AMMECR1</label>
    </interactant>
    <organismsDiffer>false</organismsDiffer>
    <experiments>3</experiments>
</comment>
<comment type="interaction">
    <interactant intactId="EBI-10171774">
        <id>P60410</id>
    </interactant>
    <interactant intactId="EBI-12823597">
        <id>Q9Y4X0-3</id>
        <label>AMMECR1</label>
    </interactant>
    <organismsDiffer>false</organismsDiffer>
    <experiments>3</experiments>
</comment>
<comment type="interaction">
    <interactant intactId="EBI-10171774">
        <id>P60410</id>
    </interactant>
    <interactant intactId="EBI-11954519">
        <id>Q49AR9</id>
        <label>ANKS1A</label>
    </interactant>
    <organismsDiffer>false</organismsDiffer>
    <experiments>5</experiments>
</comment>
<comment type="interaction">
    <interactant intactId="EBI-10171774">
        <id>P60410</id>
    </interactant>
    <interactant intactId="EBI-541426">
        <id>Q9BXS5</id>
        <label>AP1M1</label>
    </interactant>
    <organismsDiffer>false</organismsDiffer>
    <experiments>3</experiments>
</comment>
<comment type="interaction">
    <interactant intactId="EBI-10171774">
        <id>P60410</id>
    </interactant>
    <interactant intactId="EBI-10175904">
        <id>B3KTP4</id>
        <label>ApoL6</label>
    </interactant>
    <organismsDiffer>false</organismsDiffer>
    <experiments>3</experiments>
</comment>
<comment type="interaction">
    <interactant intactId="EBI-10171774">
        <id>P60410</id>
    </interactant>
    <interactant intactId="EBI-11574440">
        <id>Q9BWW8</id>
        <label>APOL6</label>
    </interactant>
    <organismsDiffer>false</organismsDiffer>
    <experiments>3</experiments>
</comment>
<comment type="interaction">
    <interactant intactId="EBI-10171774">
        <id>P60410</id>
    </interactant>
    <interactant intactId="EBI-745213">
        <id>P29972</id>
        <label>AQP1</label>
    </interactant>
    <organismsDiffer>false</organismsDiffer>
    <experiments>3</experiments>
</comment>
<comment type="interaction">
    <interactant intactId="EBI-10171774">
        <id>P60410</id>
    </interactant>
    <interactant intactId="EBI-953674">
        <id>P15514</id>
        <label>AREG</label>
    </interactant>
    <organismsDiffer>false</organismsDiffer>
    <experiments>3</experiments>
</comment>
<comment type="interaction">
    <interactant intactId="EBI-10171774">
        <id>P60410</id>
    </interactant>
    <interactant intactId="EBI-948603">
        <id>Q03989</id>
        <label>ARID5A</label>
    </interactant>
    <organismsDiffer>false</organismsDiffer>
    <experiments>3</experiments>
</comment>
<comment type="interaction">
    <interactant intactId="EBI-10171774">
        <id>P60410</id>
    </interactant>
    <interactant intactId="EBI-1993677">
        <id>Q9BZE9</id>
        <label>ASPSCR1</label>
    </interactant>
    <organismsDiffer>false</organismsDiffer>
    <experiments>3</experiments>
</comment>
<comment type="interaction">
    <interactant intactId="EBI-10171774">
        <id>P60410</id>
    </interactant>
    <interactant intactId="EBI-727146">
        <id>Q7Z3C6</id>
        <label>ATG9A</label>
    </interactant>
    <organismsDiffer>false</organismsDiffer>
    <experiments>3</experiments>
</comment>
<comment type="interaction">
    <interactant intactId="EBI-10171774">
        <id>P60410</id>
    </interactant>
    <interactant intactId="EBI-12006308">
        <id>Q7Z3C6-3</id>
        <label>ATG9A</label>
    </interactant>
    <organismsDiffer>false</organismsDiffer>
    <experiments>5</experiments>
</comment>
<comment type="interaction">
    <interactant intactId="EBI-10171774">
        <id>P60410</id>
    </interactant>
    <interactant intactId="EBI-1049505">
        <id>P30049</id>
        <label>ATP5F1D</label>
    </interactant>
    <organismsDiffer>false</organismsDiffer>
    <experiments>3</experiments>
</comment>
<comment type="interaction">
    <interactant intactId="EBI-10171774">
        <id>P60410</id>
    </interactant>
    <interactant intactId="EBI-8640233">
        <id>Q5T686</id>
        <label>AVPI1</label>
    </interactant>
    <organismsDiffer>false</organismsDiffer>
    <experiments>3</experiments>
</comment>
<comment type="interaction">
    <interactant intactId="EBI-10171774">
        <id>P60410</id>
    </interactant>
    <interactant intactId="EBI-4400025">
        <id>Q9Y2T1</id>
        <label>AXIN2</label>
    </interactant>
    <organismsDiffer>false</organismsDiffer>
    <experiments>3</experiments>
</comment>
<comment type="interaction">
    <interactant intactId="EBI-10171774">
        <id>P60410</id>
    </interactant>
    <interactant intactId="EBI-742750">
        <id>Q8TBE0</id>
        <label>BAHD1</label>
    </interactant>
    <organismsDiffer>false</organismsDiffer>
    <experiments>3</experiments>
</comment>
<comment type="interaction">
    <interactant intactId="EBI-10171774">
        <id>P60410</id>
    </interactant>
    <interactant intactId="EBI-10174813">
        <id>A8KA13</id>
        <label>BCL6B</label>
    </interactant>
    <organismsDiffer>false</organismsDiffer>
    <experiments>3</experiments>
</comment>
<comment type="interaction">
    <interactant intactId="EBI-10171774">
        <id>P60410</id>
    </interactant>
    <interactant intactId="EBI-745073">
        <id>Q9BXY8</id>
        <label>BEX2</label>
    </interactant>
    <organismsDiffer>false</organismsDiffer>
    <experiments>6</experiments>
</comment>
<comment type="interaction">
    <interactant intactId="EBI-10171774">
        <id>P60410</id>
    </interactant>
    <interactant intactId="EBI-10174327">
        <id>A8K571</id>
        <label>BMP7</label>
    </interactant>
    <organismsDiffer>false</organismsDiffer>
    <experiments>3</experiments>
</comment>
<comment type="interaction">
    <interactant intactId="EBI-10171774">
        <id>P60410</id>
    </interactant>
    <interactant intactId="EBI-1035195">
        <id>P18075</id>
        <label>BMP7</label>
    </interactant>
    <organismsDiffer>false</organismsDiffer>
    <experiments>3</experiments>
</comment>
<comment type="interaction">
    <interactant intactId="EBI-10171774">
        <id>P60410</id>
    </interactant>
    <interactant intactId="EBI-12040255">
        <id>Q0VDD7-2</id>
        <label>BRME1</label>
    </interactant>
    <organismsDiffer>false</organismsDiffer>
    <experiments>3</experiments>
</comment>
<comment type="interaction">
    <interactant intactId="EBI-10171774">
        <id>P60410</id>
    </interactant>
    <interactant intactId="EBI-744052">
        <id>Q5T681</id>
        <label>C10orf62</label>
    </interactant>
    <organismsDiffer>false</organismsDiffer>
    <experiments>3</experiments>
</comment>
<comment type="interaction">
    <interactant intactId="EBI-10171774">
        <id>P60410</id>
    </interactant>
    <interactant intactId="EBI-6660291">
        <id>Q6NUJ2</id>
        <label>C11orf87</label>
    </interactant>
    <organismsDiffer>false</organismsDiffer>
    <experiments>6</experiments>
</comment>
<comment type="interaction">
    <interactant intactId="EBI-10171774">
        <id>P60410</id>
    </interactant>
    <interactant intactId="EBI-12877892">
        <id>Q8WW18</id>
        <label>C17orf50</label>
    </interactant>
    <organismsDiffer>false</organismsDiffer>
    <experiments>3</experiments>
</comment>
<comment type="interaction">
    <interactant intactId="EBI-10171774">
        <id>P60410</id>
    </interactant>
    <interactant intactId="EBI-741214">
        <id>Q9UFG5</id>
        <label>C19orf25</label>
    </interactant>
    <organismsDiffer>false</organismsDiffer>
    <experiments>3</experiments>
</comment>
<comment type="interaction">
    <interactant intactId="EBI-10171774">
        <id>P60410</id>
    </interactant>
    <interactant intactId="EBI-7317823">
        <id>Q6P5X5</id>
        <label>C22orf39</label>
    </interactant>
    <organismsDiffer>false</organismsDiffer>
    <experiments>5</experiments>
</comment>
<comment type="interaction">
    <interactant intactId="EBI-10171774">
        <id>P60410</id>
    </interactant>
    <interactant intactId="EBI-11603468">
        <id>Q2NKX9</id>
        <label>C2orf68</label>
    </interactant>
    <organismsDiffer>false</organismsDiffer>
    <experiments>3</experiments>
</comment>
<comment type="interaction">
    <interactant intactId="EBI-10171774">
        <id>P60410</id>
    </interactant>
    <interactant intactId="EBI-905851">
        <id>P01024</id>
        <label>C3</label>
    </interactant>
    <organismsDiffer>false</organismsDiffer>
    <experiments>3</experiments>
</comment>
<comment type="interaction">
    <interactant intactId="EBI-10171774">
        <id>P60410</id>
    </interactant>
    <interactant intactId="EBI-3920838">
        <id>Q96NX5</id>
        <label>CAMK1G</label>
    </interactant>
    <organismsDiffer>false</organismsDiffer>
    <experiments>3</experiments>
</comment>
<comment type="interaction">
    <interactant intactId="EBI-10171774">
        <id>P60410</id>
    </interactant>
    <interactant intactId="EBI-3866279">
        <id>Q9BWT7</id>
        <label>CARD10</label>
    </interactant>
    <organismsDiffer>false</organismsDiffer>
    <experiments>3</experiments>
</comment>
<comment type="interaction">
    <interactant intactId="EBI-10171774">
        <id>P60410</id>
    </interactant>
    <interactant intactId="EBI-718719">
        <id>Q9Y2V2</id>
        <label>CARHSP1</label>
    </interactant>
    <organismsDiffer>false</organismsDiffer>
    <experiments>6</experiments>
</comment>
<comment type="interaction">
    <interactant intactId="EBI-10171774">
        <id>P60410</id>
    </interactant>
    <interactant intactId="EBI-744545">
        <id>Q8NEC5</id>
        <label>CATSPER1</label>
    </interactant>
    <organismsDiffer>false</organismsDiffer>
    <experiments>8</experiments>
</comment>
<comment type="interaction">
    <interactant intactId="EBI-10171774">
        <id>P60410</id>
    </interactant>
    <interactant intactId="EBI-21668062">
        <id>Q8IV13</id>
        <label>CCNJL</label>
    </interactant>
    <organismsDiffer>false</organismsDiffer>
    <experiments>4</experiments>
</comment>
<comment type="interaction">
    <interactant intactId="EBI-10171774">
        <id>P60410</id>
    </interactant>
    <interactant intactId="EBI-741528">
        <id>Q9UKJ5</id>
        <label>CHIC2</label>
    </interactant>
    <organismsDiffer>false</organismsDiffer>
    <experiments>6</experiments>
</comment>
<comment type="interaction">
    <interactant intactId="EBI-10171774">
        <id>P60410</id>
    </interactant>
    <interactant intactId="EBI-947551">
        <id>Q9H2X0</id>
        <label>CHRD</label>
    </interactant>
    <organismsDiffer>false</organismsDiffer>
    <experiments>6</experiments>
</comment>
<comment type="interaction">
    <interactant intactId="EBI-10171774">
        <id>P60410</id>
    </interactant>
    <interactant intactId="EBI-9008836">
        <id>P07510</id>
        <label>CHRNG</label>
    </interactant>
    <organismsDiffer>false</organismsDiffer>
    <experiments>4</experiments>
</comment>
<comment type="interaction">
    <interactant intactId="EBI-10171774">
        <id>P60410</id>
    </interactant>
    <interactant intactId="EBI-11979451">
        <id>P07510-2</id>
        <label>CHRNG</label>
    </interactant>
    <organismsDiffer>false</organismsDiffer>
    <experiments>6</experiments>
</comment>
<comment type="interaction">
    <interactant intactId="EBI-10171774">
        <id>P60410</id>
    </interactant>
    <interactant intactId="EBI-633400">
        <id>Q9HAZ1</id>
        <label>CLK4</label>
    </interactant>
    <organismsDiffer>false</organismsDiffer>
    <experiments>3</experiments>
</comment>
<comment type="interaction">
    <interactant intactId="EBI-10171774">
        <id>P60410</id>
    </interactant>
    <interactant intactId="EBI-741032">
        <id>Q8NE01</id>
        <label>CNNM3</label>
    </interactant>
    <organismsDiffer>false</organismsDiffer>
    <experiments>6</experiments>
</comment>
<comment type="interaction">
    <interactant intactId="EBI-10171774">
        <id>P60410</id>
    </interactant>
    <interactant intactId="EBI-747133">
        <id>P27658</id>
        <label>COL8A1</label>
    </interactant>
    <organismsDiffer>false</organismsDiffer>
    <experiments>8</experiments>
</comment>
<comment type="interaction">
    <interactant intactId="EBI-10171774">
        <id>P60410</id>
    </interactant>
    <interactant intactId="EBI-711311">
        <id>Q14061</id>
        <label>COX17</label>
    </interactant>
    <organismsDiffer>false</organismsDiffer>
    <experiments>3</experiments>
</comment>
<comment type="interaction">
    <interactant intactId="EBI-10171774">
        <id>P60410</id>
    </interactant>
    <interactant intactId="EBI-713677">
        <id>Q9UGL9</id>
        <label>CRCT1</label>
    </interactant>
    <organismsDiffer>false</organismsDiffer>
    <experiments>6</experiments>
</comment>
<comment type="interaction">
    <interactant intactId="EBI-10171774">
        <id>P60410</id>
    </interactant>
    <interactant intactId="EBI-10192698">
        <id>Q02930-3</id>
        <label>CREB5</label>
    </interactant>
    <organismsDiffer>false</organismsDiffer>
    <experiments>10</experiments>
</comment>
<comment type="interaction">
    <interactant intactId="EBI-10171774">
        <id>P60410</id>
    </interactant>
    <interactant intactId="EBI-3870390">
        <id>P06850</id>
        <label>CRH</label>
    </interactant>
    <organismsDiffer>false</organismsDiffer>
    <experiments>3</experiments>
</comment>
<comment type="interaction">
    <interactant intactId="EBI-10171774">
        <id>P60410</id>
    </interactant>
    <interactant intactId="EBI-2212355">
        <id>Q49AN0</id>
        <label>CRY2</label>
    </interactant>
    <organismsDiffer>false</organismsDiffer>
    <experiments>3</experiments>
</comment>
<comment type="interaction">
    <interactant intactId="EBI-10171774">
        <id>P60410</id>
    </interactant>
    <interactant intactId="EBI-2872294">
        <id>P09603</id>
        <label>CSF1</label>
    </interactant>
    <organismsDiffer>false</organismsDiffer>
    <experiments>3</experiments>
</comment>
<comment type="interaction">
    <interactant intactId="EBI-10171774">
        <id>P60410</id>
    </interactant>
    <interactant intactId="EBI-10295404">
        <id>Q99895</id>
        <label>CTRC</label>
    </interactant>
    <organismsDiffer>false</organismsDiffer>
    <experiments>3</experiments>
</comment>
<comment type="interaction">
    <interactant intactId="EBI-10171774">
        <id>P60410</id>
    </interactant>
    <interactant intactId="EBI-8633740">
        <id>Q96SQ9</id>
        <label>CYP2S1</label>
    </interactant>
    <organismsDiffer>false</organismsDiffer>
    <experiments>3</experiments>
</comment>
<comment type="interaction">
    <interactant intactId="EBI-10171774">
        <id>P60410</id>
    </interactant>
    <interactant intactId="EBI-3867333">
        <id>A8MQ03</id>
        <label>CYSRT1</label>
    </interactant>
    <organismsDiffer>false</organismsDiffer>
    <experiments>6</experiments>
</comment>
<comment type="interaction">
    <interactant intactId="EBI-10171774">
        <id>P60410</id>
    </interactant>
    <interactant intactId="EBI-8646694">
        <id>O43602</id>
        <label>DCX</label>
    </interactant>
    <organismsDiffer>false</organismsDiffer>
    <experiments>3</experiments>
</comment>
<comment type="interaction">
    <interactant intactId="EBI-10171774">
        <id>P60410</id>
    </interactant>
    <interactant intactId="EBI-10316543">
        <id>Q9NXZ2</id>
        <label>DDX43</label>
    </interactant>
    <organismsDiffer>false</organismsDiffer>
    <experiments>3</experiments>
</comment>
<comment type="interaction">
    <interactant intactId="EBI-10171774">
        <id>P60410</id>
    </interactant>
    <interactant intactId="EBI-5459844">
        <id>Q8NHQ9</id>
        <label>DDX55</label>
    </interactant>
    <organismsDiffer>false</organismsDiffer>
    <experiments>3</experiments>
</comment>
<comment type="interaction">
    <interactant intactId="EBI-10171774">
        <id>P60410</id>
    </interactant>
    <interactant intactId="EBI-351257">
        <id>P26196</id>
        <label>DDX6</label>
    </interactant>
    <organismsDiffer>false</organismsDiffer>
    <experiments>6</experiments>
</comment>
<comment type="interaction">
    <interactant intactId="EBI-10171774">
        <id>P60410</id>
    </interactant>
    <interactant intactId="EBI-7962814">
        <id>Q9GZP9</id>
        <label>DERL2</label>
    </interactant>
    <organismsDiffer>false</organismsDiffer>
    <experiments>3</experiments>
</comment>
<comment type="interaction">
    <interactant intactId="EBI-10171774">
        <id>P60410</id>
    </interactant>
    <interactant intactId="EBI-746300">
        <id>Q96LJ7</id>
        <label>DHRS1</label>
    </interactant>
    <organismsDiffer>false</organismsDiffer>
    <experiments>8</experiments>
</comment>
<comment type="interaction">
    <interactant intactId="EBI-10171774">
        <id>P60410</id>
    </interactant>
    <interactant intactId="EBI-1051531">
        <id>Q6P158</id>
        <label>DHX57</label>
    </interactant>
    <organismsDiffer>false</organismsDiffer>
    <experiments>6</experiments>
</comment>
<comment type="interaction">
    <interactant intactId="EBI-10171774">
        <id>P60410</id>
    </interactant>
    <interactant intactId="EBI-9679045">
        <id>Q9NQL9</id>
        <label>DMRT3</label>
    </interactant>
    <organismsDiffer>false</organismsDiffer>
    <experiments>6</experiments>
</comment>
<comment type="interaction">
    <interactant intactId="EBI-10171774">
        <id>P60410</id>
    </interactant>
    <interactant intactId="EBI-448771">
        <id>Q92608</id>
        <label>DOCK2</label>
    </interactant>
    <organismsDiffer>false</organismsDiffer>
    <experiments>6</experiments>
</comment>
<comment type="interaction">
    <interactant intactId="EBI-10171774">
        <id>P60410</id>
    </interactant>
    <interactant intactId="EBI-2859983">
        <id>P42892</id>
        <label>ECE1</label>
    </interactant>
    <organismsDiffer>false</organismsDiffer>
    <experiments>3</experiments>
</comment>
<comment type="interaction">
    <interactant intactId="EBI-10171774">
        <id>P60410</id>
    </interactant>
    <interactant intactId="EBI-743414">
        <id>O95967</id>
        <label>EFEMP2</label>
    </interactant>
    <organismsDiffer>false</organismsDiffer>
    <experiments>3</experiments>
</comment>
<comment type="interaction">
    <interactant intactId="EBI-10171774">
        <id>P60410</id>
    </interactant>
    <interactant intactId="EBI-398610">
        <id>O60573</id>
        <label>EIF4E2</label>
    </interactant>
    <organismsDiffer>false</organismsDiffer>
    <experiments>3</experiments>
</comment>
<comment type="interaction">
    <interactant intactId="EBI-10171774">
        <id>P60410</id>
    </interactant>
    <interactant intactId="EBI-744099">
        <id>Q9H0I2</id>
        <label>ENKD1</label>
    </interactant>
    <organismsDiffer>false</organismsDiffer>
    <experiments>3</experiments>
</comment>
<comment type="interaction">
    <interactant intactId="EBI-10171774">
        <id>P60410</id>
    </interactant>
    <interactant intactId="EBI-946972">
        <id>Q9UM22</id>
        <label>EPDR1</label>
    </interactant>
    <organismsDiffer>false</organismsDiffer>
    <experiments>3</experiments>
</comment>
<comment type="interaction">
    <interactant intactId="EBI-10171774">
        <id>P60410</id>
    </interactant>
    <interactant intactId="EBI-3943864">
        <id>Q8N9I5</id>
        <label>FADS6</label>
    </interactant>
    <organismsDiffer>false</organismsDiffer>
    <experiments>3</experiments>
</comment>
<comment type="interaction">
    <interactant intactId="EBI-10171774">
        <id>P60410</id>
    </interactant>
    <interactant intactId="EBI-4397076">
        <id>P16930</id>
        <label>FAH</label>
    </interactant>
    <organismsDiffer>false</organismsDiffer>
    <experiments>3</experiments>
</comment>
<comment type="interaction">
    <interactant intactId="EBI-10171774">
        <id>P60410</id>
    </interactant>
    <interactant intactId="EBI-1752811">
        <id>Q9BQ89</id>
        <label>FAM110A</label>
    </interactant>
    <organismsDiffer>false</organismsDiffer>
    <experiments>3</experiments>
</comment>
<comment type="interaction">
    <interactant intactId="EBI-10171774">
        <id>P60410</id>
    </interactant>
    <interactant intactId="EBI-719941">
        <id>Q3B820</id>
        <label>FAM161A</label>
    </interactant>
    <organismsDiffer>false</organismsDiffer>
    <experiments>3</experiments>
</comment>
<comment type="interaction">
    <interactant intactId="EBI-10171774">
        <id>P60410</id>
    </interactant>
    <interactant intactId="EBI-12006844">
        <id>A6H8Z2</id>
        <label>FAM221B</label>
    </interactant>
    <organismsDiffer>false</organismsDiffer>
    <experiments>3</experiments>
</comment>
<comment type="interaction">
    <interactant intactId="EBI-10171774">
        <id>P60410</id>
    </interactant>
    <interactant intactId="EBI-2602739">
        <id>Q08E93</id>
        <label>FAM27E3</label>
    </interactant>
    <organismsDiffer>false</organismsDiffer>
    <experiments>3</experiments>
</comment>
<comment type="interaction">
    <interactant intactId="EBI-10171774">
        <id>P60410</id>
    </interactant>
    <interactant intactId="EBI-751192">
        <id>Q5HYJ3</id>
        <label>FAM76B</label>
    </interactant>
    <organismsDiffer>false</organismsDiffer>
    <experiments>3</experiments>
</comment>
<comment type="interaction">
    <interactant intactId="EBI-10171774">
        <id>P60410</id>
    </interactant>
    <interactant intactId="EBI-11956087">
        <id>Q5HYJ3-3</id>
        <label>FAM76B</label>
    </interactant>
    <organismsDiffer>false</organismsDiffer>
    <experiments>3</experiments>
</comment>
<comment type="interaction">
    <interactant intactId="EBI-10171774">
        <id>P60410</id>
    </interactant>
    <interactant intactId="EBI-6658203">
        <id>Q86YD7</id>
        <label>FAM90A1</label>
    </interactant>
    <organismsDiffer>false</organismsDiffer>
    <experiments>3</experiments>
</comment>
<comment type="interaction">
    <interactant intactId="EBI-10171774">
        <id>P60410</id>
    </interactant>
    <interactant intactId="EBI-2513774">
        <id>O95363</id>
        <label>FARS2</label>
    </interactant>
    <organismsDiffer>false</organismsDiffer>
    <experiments>3</experiments>
</comment>
<comment type="interaction">
    <interactant intactId="EBI-10171774">
        <id>P60410</id>
    </interactant>
    <interactant intactId="EBI-719816">
        <id>Q9NWN3</id>
        <label>FBXO34</label>
    </interactant>
    <organismsDiffer>false</organismsDiffer>
    <experiments>3</experiments>
</comment>
<comment type="interaction">
    <interactant intactId="EBI-10171774">
        <id>P60410</id>
    </interactant>
    <interactant intactId="EBI-741068">
        <id>Q969U6</id>
        <label>FBXW5</label>
    </interactant>
    <organismsDiffer>false</organismsDiffer>
    <experiments>6</experiments>
</comment>
<comment type="interaction">
    <interactant intactId="EBI-10171774">
        <id>P60410</id>
    </interactant>
    <interactant intactId="EBI-11988727">
        <id>A0PJY2</id>
        <label>FEZF1</label>
    </interactant>
    <organismsDiffer>false</organismsDiffer>
    <experiments>3</experiments>
</comment>
<comment type="interaction">
    <interactant intactId="EBI-10171774">
        <id>P60410</id>
    </interactant>
    <interactant intactId="EBI-3916225">
        <id>Q99853</id>
        <label>FOXB1</label>
    </interactant>
    <organismsDiffer>false</organismsDiffer>
    <experiments>3</experiments>
</comment>
<comment type="interaction">
    <interactant intactId="EBI-10171774">
        <id>P60410</id>
    </interactant>
    <interactant intactId="EBI-725515">
        <id>O43559</id>
        <label>FRS3</label>
    </interactant>
    <organismsDiffer>false</organismsDiffer>
    <experiments>3</experiments>
</comment>
<comment type="interaction">
    <interactant intactId="EBI-10171774">
        <id>P60410</id>
    </interactant>
    <interactant intactId="EBI-12156897">
        <id>Q9BXU8</id>
        <label>FTHL17</label>
    </interactant>
    <organismsDiffer>false</organismsDiffer>
    <experiments>3</experiments>
</comment>
<comment type="interaction">
    <interactant intactId="EBI-10171774">
        <id>P60410</id>
    </interactant>
    <interactant intactId="EBI-8803802">
        <id>Q9ULW2</id>
        <label>FZD10</label>
    </interactant>
    <organismsDiffer>false</organismsDiffer>
    <experiments>3</experiments>
</comment>
<comment type="interaction">
    <interactant intactId="EBI-10171774">
        <id>P60410</id>
    </interactant>
    <interactant intactId="EBI-752049">
        <id>Q8NEG0</id>
        <label>GARIN6</label>
    </interactant>
    <organismsDiffer>false</organismsDiffer>
    <experiments>3</experiments>
</comment>
<comment type="interaction">
    <interactant intactId="EBI-10171774">
        <id>P60410</id>
    </interactant>
    <interactant intactId="EBI-744104">
        <id>P55040</id>
        <label>GEM</label>
    </interactant>
    <organismsDiffer>false</organismsDiffer>
    <experiments>3</experiments>
</comment>
<comment type="interaction">
    <interactant intactId="EBI-10171774">
        <id>P60410</id>
    </interactant>
    <interactant intactId="EBI-8799578">
        <id>Q9NXC2</id>
        <label>GFOD1</label>
    </interactant>
    <organismsDiffer>false</organismsDiffer>
    <experiments>3</experiments>
</comment>
<comment type="interaction">
    <interactant intactId="EBI-10171774">
        <id>P60410</id>
    </interactant>
    <interactant intactId="EBI-7466542">
        <id>P43220</id>
        <label>GLP1R</label>
    </interactant>
    <organismsDiffer>false</organismsDiffer>
    <experiments>3</experiments>
</comment>
<comment type="interaction">
    <interactant intactId="EBI-10171774">
        <id>P60410</id>
    </interactant>
    <interactant intactId="EBI-374781">
        <id>O76003</id>
        <label>GLRX3</label>
    </interactant>
    <organismsDiffer>false</organismsDiffer>
    <experiments>8</experiments>
</comment>
<comment type="interaction">
    <interactant intactId="EBI-10171774">
        <id>P60410</id>
    </interactant>
    <interactant intactId="EBI-715463">
        <id>Q6IB77</id>
        <label>GLYAT</label>
    </interactant>
    <organismsDiffer>false</organismsDiffer>
    <experiments>3</experiments>
</comment>
<comment type="interaction">
    <interactant intactId="EBI-10171774">
        <id>P60410</id>
    </interactant>
    <interactant intactId="EBI-353997">
        <id>P04899</id>
        <label>GNAI2</label>
    </interactant>
    <organismsDiffer>false</organismsDiffer>
    <experiments>3</experiments>
</comment>
<comment type="interaction">
    <interactant intactId="EBI-10171774">
        <id>P60410</id>
    </interactant>
    <interactant intactId="EBI-4291090">
        <id>Q9Y223</id>
        <label>GNE</label>
    </interactant>
    <organismsDiffer>false</organismsDiffer>
    <experiments>3</experiments>
</comment>
<comment type="interaction">
    <interactant intactId="EBI-10171774">
        <id>P60410</id>
    </interactant>
    <interactant intactId="EBI-11975289">
        <id>Q9Y223-2</id>
        <label>GNE</label>
    </interactant>
    <organismsDiffer>false</organismsDiffer>
    <experiments>5</experiments>
</comment>
<comment type="interaction">
    <interactant intactId="EBI-10171774">
        <id>P60410</id>
    </interactant>
    <interactant intactId="EBI-10181276">
        <id>Q0D2H9</id>
        <label>GOLGA8DP</label>
    </interactant>
    <organismsDiffer>false</organismsDiffer>
    <experiments>3</experiments>
</comment>
<comment type="interaction">
    <interactant intactId="EBI-10171774">
        <id>P60410</id>
    </interactant>
    <interactant intactId="EBI-751540">
        <id>O95872</id>
        <label>GPANK1</label>
    </interactant>
    <organismsDiffer>false</organismsDiffer>
    <experiments>3</experiments>
</comment>
<comment type="interaction">
    <interactant intactId="EBI-10171774">
        <id>P60410</id>
    </interactant>
    <interactant intactId="EBI-11659720">
        <id>Q86YW7</id>
        <label>GPHB5</label>
    </interactant>
    <organismsDiffer>false</organismsDiffer>
    <experiments>3</experiments>
</comment>
<comment type="interaction">
    <interactant intactId="EBI-10171774">
        <id>P60410</id>
    </interactant>
    <interactant intactId="EBI-747754">
        <id>P28799</id>
        <label>GRN</label>
    </interactant>
    <organismsDiffer>false</organismsDiffer>
    <experiments>3</experiments>
</comment>
<comment type="interaction">
    <interactant intactId="EBI-10171774">
        <id>P60410</id>
    </interactant>
    <interactant intactId="EBI-11978177">
        <id>Q96NT3-2</id>
        <label>GUCD1</label>
    </interactant>
    <organismsDiffer>false</organismsDiffer>
    <experiments>5</experiments>
</comment>
<comment type="interaction">
    <interactant intactId="EBI-10171774">
        <id>P60410</id>
    </interactant>
    <interactant intactId="EBI-11956675">
        <id>Q9GZV7</id>
        <label>HAPLN2</label>
    </interactant>
    <organismsDiffer>false</organismsDiffer>
    <experiments>3</experiments>
</comment>
<comment type="interaction">
    <interactant intactId="EBI-10171774">
        <id>P60410</id>
    </interactant>
    <interactant intactId="EBI-9834454">
        <id>P08631-2</id>
        <label>HCK</label>
    </interactant>
    <organismsDiffer>false</organismsDiffer>
    <experiments>3</experiments>
</comment>
<comment type="interaction">
    <interactant intactId="EBI-10171774">
        <id>P60410</id>
    </interactant>
    <interactant intactId="EBI-10330335">
        <id>V9HWJ5</id>
        <label>HEL-S-90n</label>
    </interactant>
    <organismsDiffer>false</organismsDiffer>
    <experiments>3</experiments>
</comment>
<comment type="interaction">
    <interactant intactId="EBI-10171774">
        <id>P60410</id>
    </interactant>
    <interactant intactId="EBI-747421">
        <id>Q03014</id>
        <label>HHEX</label>
    </interactant>
    <organismsDiffer>false</organismsDiffer>
    <experiments>6</experiments>
</comment>
<comment type="interaction">
    <interactant intactId="EBI-10171774">
        <id>P60410</id>
    </interactant>
    <interactant intactId="EBI-740785">
        <id>P49639</id>
        <label>HOXA1</label>
    </interactant>
    <organismsDiffer>false</organismsDiffer>
    <experiments>9</experiments>
</comment>
<comment type="interaction">
    <interactant intactId="EBI-10171774">
        <id>P60410</id>
    </interactant>
    <interactant intactId="EBI-3893317">
        <id>P09067</id>
        <label>HOXB5</label>
    </interactant>
    <organismsDiffer>false</organismsDiffer>
    <experiments>3</experiments>
</comment>
<comment type="interaction">
    <interactant intactId="EBI-10171774">
        <id>P60410</id>
    </interactant>
    <interactant intactId="EBI-745290">
        <id>P17482</id>
        <label>HOXB9</label>
    </interactant>
    <organismsDiffer>false</organismsDiffer>
    <experiments>3</experiments>
</comment>
<comment type="interaction">
    <interactant intactId="EBI-10171774">
        <id>P60410</id>
    </interactant>
    <interactant intactId="EBI-1752118">
        <id>P31273</id>
        <label>HOXC8</label>
    </interactant>
    <organismsDiffer>false</organismsDiffer>
    <experiments>5</experiments>
</comment>
<comment type="interaction">
    <interactant intactId="EBI-10171774">
        <id>P60410</id>
    </interactant>
    <interactant intactId="EBI-749311">
        <id>P37235</id>
        <label>HPCAL1</label>
    </interactant>
    <organismsDiffer>false</organismsDiffer>
    <experiments>6</experiments>
</comment>
<comment type="interaction">
    <interactant intactId="EBI-10171774">
        <id>P60410</id>
    </interactant>
    <interactant intactId="EBI-12294537">
        <id>O60243</id>
        <label>HS6ST1</label>
    </interactant>
    <organismsDiffer>false</organismsDiffer>
    <experiments>3</experiments>
</comment>
<comment type="interaction">
    <interactant intactId="EBI-10171774">
        <id>P60410</id>
    </interactant>
    <interactant intactId="EBI-3918847">
        <id>Q9H2F3</id>
        <label>HSD3B7</label>
    </interactant>
    <organismsDiffer>false</organismsDiffer>
    <experiments>8</experiments>
</comment>
<comment type="interaction">
    <interactant intactId="EBI-10171774">
        <id>P60410</id>
    </interactant>
    <interactant intactId="EBI-10291310">
        <id>Q96MM6</id>
        <label>HSPA12B</label>
    </interactant>
    <organismsDiffer>false</organismsDiffer>
    <experiments>3</experiments>
</comment>
<comment type="interaction">
    <interactant intactId="EBI-10171774">
        <id>P60410</id>
    </interactant>
    <interactant intactId="EBI-352528">
        <id>P10809</id>
        <label>HSPD1</label>
    </interactant>
    <organismsDiffer>false</organismsDiffer>
    <experiments>3</experiments>
</comment>
<comment type="interaction">
    <interactant intactId="EBI-10171774">
        <id>P60410</id>
    </interactant>
    <interactant intactId="EBI-1035358">
        <id>P05362</id>
        <label>ICAM1</label>
    </interactant>
    <organismsDiffer>false</organismsDiffer>
    <experiments>3</experiments>
</comment>
<comment type="interaction">
    <interactant intactId="EBI-10171774">
        <id>P60410</id>
    </interactant>
    <interactant intactId="EBI-947015">
        <id>P24592</id>
        <label>IGFBP6</label>
    </interactant>
    <organismsDiffer>false</organismsDiffer>
    <experiments>3</experiments>
</comment>
<comment type="interaction">
    <interactant intactId="EBI-10171774">
        <id>P60410</id>
    </interactant>
    <interactant intactId="EBI-8293590">
        <id>Q969P0</id>
        <label>IGSF8</label>
    </interactant>
    <organismsDiffer>false</organismsDiffer>
    <experiments>6</experiments>
</comment>
<comment type="interaction">
    <interactant intactId="EBI-10171774">
        <id>P60410</id>
    </interactant>
    <interactant intactId="EBI-1031632">
        <id>P22301</id>
        <label>IL10</label>
    </interactant>
    <organismsDiffer>false</organismsDiffer>
    <experiments>3</experiments>
</comment>
<comment type="interaction">
    <interactant intactId="EBI-10171774">
        <id>P60410</id>
    </interactant>
    <interactant intactId="EBI-17178971">
        <id>Q14005-2</id>
        <label>IL16</label>
    </interactant>
    <organismsDiffer>false</organismsDiffer>
    <experiments>3</experiments>
</comment>
<comment type="interaction">
    <interactant intactId="EBI-10171774">
        <id>P60410</id>
    </interactant>
    <interactant intactId="EBI-80475">
        <id>P31785</id>
        <label>IL2RG</label>
    </interactant>
    <organismsDiffer>false</organismsDiffer>
    <experiments>3</experiments>
</comment>
<comment type="interaction">
    <interactant intactId="EBI-10171774">
        <id>P60410</id>
    </interactant>
    <interactant intactId="EBI-715611">
        <id>Q9C086</id>
        <label>INO80B</label>
    </interactant>
    <organismsDiffer>false</organismsDiffer>
    <experiments>3</experiments>
</comment>
<comment type="interaction">
    <interactant intactId="EBI-10171774">
        <id>P60410</id>
    </interactant>
    <interactant intactId="EBI-7600112">
        <id>Q6P9B9</id>
        <label>INTS5</label>
    </interactant>
    <organismsDiffer>false</organismsDiffer>
    <experiments>3</experiments>
</comment>
<comment type="interaction">
    <interactant intactId="EBI-10171774">
        <id>P60410</id>
    </interactant>
    <interactant intactId="EBI-10990676">
        <id>Q96PC2</id>
        <label>IP6K3</label>
    </interactant>
    <organismsDiffer>false</organismsDiffer>
    <experiments>3</experiments>
</comment>
<comment type="interaction">
    <interactant intactId="EBI-10171774">
        <id>P60410</id>
    </interactant>
    <interactant intactId="EBI-300173">
        <id>P05107</id>
        <label>ITGB2</label>
    </interactant>
    <organismsDiffer>false</organismsDiffer>
    <experiments>3</experiments>
</comment>
<comment type="interaction">
    <interactant intactId="EBI-10171774">
        <id>P60410</id>
    </interactant>
    <interactant intactId="EBI-11051601">
        <id>P16144-2</id>
        <label>ITGB4</label>
    </interactant>
    <organismsDiffer>false</organismsDiffer>
    <experiments>3</experiments>
</comment>
<comment type="interaction">
    <interactant intactId="EBI-10171774">
        <id>P60410</id>
    </interactant>
    <interactant intactId="EBI-10178729">
        <id>L7RT22</id>
        <label>ITGB5</label>
    </interactant>
    <organismsDiffer>false</organismsDiffer>
    <experiments>3</experiments>
</comment>
<comment type="interaction">
    <interactant intactId="EBI-10171774">
        <id>P60410</id>
    </interactant>
    <interactant intactId="EBI-1223434">
        <id>P18084</id>
        <label>ITGB5</label>
    </interactant>
    <organismsDiffer>false</organismsDiffer>
    <experiments>3</experiments>
</comment>
<comment type="interaction">
    <interactant intactId="EBI-10171774">
        <id>P60410</id>
    </interactant>
    <interactant intactId="EBI-2510602">
        <id>Q15040</id>
        <label>JOSD1</label>
    </interactant>
    <organismsDiffer>false</organismsDiffer>
    <experiments>6</experiments>
</comment>
<comment type="interaction">
    <interactant intactId="EBI-10171774">
        <id>P60410</id>
    </interactant>
    <interactant intactId="EBI-1055254">
        <id>Q8WXH2</id>
        <label>JPH3</label>
    </interactant>
    <organismsDiffer>false</organismsDiffer>
    <experiments>3</experiments>
</comment>
<comment type="interaction">
    <interactant intactId="EBI-10171774">
        <id>P60410</id>
    </interactant>
    <interactant intactId="EBI-6426443">
        <id>Q2WGJ6</id>
        <label>KLHL38</label>
    </interactant>
    <organismsDiffer>false</organismsDiffer>
    <experiments>6</experiments>
</comment>
<comment type="interaction">
    <interactant intactId="EBI-10171774">
        <id>P60410</id>
    </interactant>
    <interactant intactId="EBI-3915857">
        <id>O60259</id>
        <label>KLK8</label>
    </interactant>
    <organismsDiffer>false</organismsDiffer>
    <experiments>3</experiments>
</comment>
<comment type="interaction">
    <interactant intactId="EBI-10171774">
        <id>P60410</id>
    </interactant>
    <interactant intactId="EBI-10981970">
        <id>Q5T749</id>
        <label>KPRP</label>
    </interactant>
    <organismsDiffer>false</organismsDiffer>
    <experiments>3</experiments>
</comment>
<comment type="interaction">
    <interactant intactId="EBI-10171774">
        <id>P60410</id>
    </interactant>
    <interactant intactId="EBI-742094">
        <id>P35900</id>
        <label>KRT20</label>
    </interactant>
    <organismsDiffer>false</organismsDiffer>
    <experiments>6</experiments>
</comment>
<comment type="interaction">
    <interactant intactId="EBI-10171774">
        <id>P60410</id>
    </interactant>
    <interactant intactId="EBI-10221390">
        <id>P78385</id>
        <label>KRT83</label>
    </interactant>
    <organismsDiffer>false</organismsDiffer>
    <experiments>3</experiments>
</comment>
<comment type="interaction">
    <interactant intactId="EBI-10171774">
        <id>P60410</id>
    </interactant>
    <interactant intactId="EBI-11959885">
        <id>Q07627</id>
        <label>KRTAP1-1</label>
    </interactant>
    <organismsDiffer>false</organismsDiffer>
    <experiments>3</experiments>
</comment>
<comment type="interaction">
    <interactant intactId="EBI-10171774">
        <id>P60410</id>
    </interactant>
    <interactant intactId="EBI-11749135">
        <id>Q8IUG1</id>
        <label>KRTAP1-3</label>
    </interactant>
    <organismsDiffer>false</organismsDiffer>
    <experiments>3</experiments>
</comment>
<comment type="interaction">
    <interactant intactId="EBI-10171774">
        <id>P60410</id>
    </interactant>
    <interactant intactId="EBI-11955579">
        <id>P60014</id>
        <label>KRTAP10-10</label>
    </interactant>
    <organismsDiffer>false</organismsDiffer>
    <experiments>3</experiments>
</comment>
<comment type="interaction">
    <interactant intactId="EBI-10171774">
        <id>P60410</id>
    </interactant>
    <interactant intactId="EBI-10217483">
        <id>P60412</id>
        <label>KRTAP10-11</label>
    </interactant>
    <organismsDiffer>false</organismsDiffer>
    <experiments>3</experiments>
</comment>
<comment type="interaction">
    <interactant intactId="EBI-10171774">
        <id>P60410</id>
    </interactant>
    <interactant intactId="EBI-10172150">
        <id>P60370</id>
        <label>KRTAP10-5</label>
    </interactant>
    <organismsDiffer>false</organismsDiffer>
    <experiments>3</experiments>
</comment>
<comment type="interaction">
    <interactant intactId="EBI-10171774">
        <id>P60410</id>
    </interactant>
    <interactant intactId="EBI-10172290">
        <id>P60409</id>
        <label>KRTAP10-7</label>
    </interactant>
    <organismsDiffer>false</organismsDiffer>
    <experiments>6</experiments>
</comment>
<comment type="interaction">
    <interactant intactId="EBI-10171774">
        <id>P60410</id>
    </interactant>
    <interactant intactId="EBI-10171774">
        <id>P60410</id>
        <label>KRTAP10-8</label>
    </interactant>
    <organismsDiffer>false</organismsDiffer>
    <experiments>6</experiments>
</comment>
<comment type="interaction">
    <interactant intactId="EBI-10171774">
        <id>P60410</id>
    </interactant>
    <interactant intactId="EBI-10172052">
        <id>P60411</id>
        <label>KRTAP10-9</label>
    </interactant>
    <organismsDiffer>false</organismsDiffer>
    <experiments>6</experiments>
</comment>
<comment type="interaction">
    <interactant intactId="EBI-10171774">
        <id>P60410</id>
    </interactant>
    <interactant intactId="EBI-1052037">
        <id>Q8IUC1</id>
        <label>KRTAP11-1</label>
    </interactant>
    <organismsDiffer>false</organismsDiffer>
    <experiments>3</experiments>
</comment>
<comment type="interaction">
    <interactant intactId="EBI-10171774">
        <id>P60410</id>
    </interactant>
    <interactant intactId="EBI-10210845">
        <id>P59990</id>
        <label>KRTAP12-1</label>
    </interactant>
    <organismsDiffer>false</organismsDiffer>
    <experiments>6</experiments>
</comment>
<comment type="interaction">
    <interactant intactId="EBI-10171774">
        <id>P60410</id>
    </interactant>
    <interactant intactId="EBI-10176379">
        <id>P59991</id>
        <label>KRTAP12-2</label>
    </interactant>
    <organismsDiffer>false</organismsDiffer>
    <experiments>3</experiments>
</comment>
<comment type="interaction">
    <interactant intactId="EBI-10171774">
        <id>P60410</id>
    </interactant>
    <interactant intactId="EBI-11953334">
        <id>P60328</id>
        <label>KRTAP12-3</label>
    </interactant>
    <organismsDiffer>false</organismsDiffer>
    <experiments>3</experiments>
</comment>
<comment type="interaction">
    <interactant intactId="EBI-10171774">
        <id>P60410</id>
    </interactant>
    <interactant intactId="EBI-11992140">
        <id>Q3LI76</id>
        <label>KRTAP15-1</label>
    </interactant>
    <organismsDiffer>false</organismsDiffer>
    <experiments>3</experiments>
</comment>
<comment type="interaction">
    <interactant intactId="EBI-10171774">
        <id>P60410</id>
    </interactant>
    <interactant intactId="EBI-11988175">
        <id>Q9BYP8</id>
        <label>KRTAP17-1</label>
    </interactant>
    <organismsDiffer>false</organismsDiffer>
    <experiments>3</experiments>
</comment>
<comment type="interaction">
    <interactant intactId="EBI-10171774">
        <id>P60410</id>
    </interactant>
    <interactant intactId="EBI-10241353">
        <id>Q3SYF9</id>
        <label>KRTAP19-7</label>
    </interactant>
    <organismsDiffer>false</organismsDiffer>
    <experiments>3</experiments>
</comment>
<comment type="interaction">
    <interactant intactId="EBI-10171774">
        <id>P60410</id>
    </interactant>
    <interactant intactId="EBI-9996449">
        <id>Q9BYR8</id>
        <label>KRTAP3-1</label>
    </interactant>
    <organismsDiffer>false</organismsDiffer>
    <experiments>3</experiments>
</comment>
<comment type="interaction">
    <interactant intactId="EBI-10171774">
        <id>P60410</id>
    </interactant>
    <interactant intactId="EBI-751260">
        <id>Q9BYR7</id>
        <label>KRTAP3-2</label>
    </interactant>
    <organismsDiffer>false</organismsDiffer>
    <experiments>3</experiments>
</comment>
<comment type="interaction">
    <interactant intactId="EBI-10171774">
        <id>P60410</id>
    </interactant>
    <interactant intactId="EBI-10302392">
        <id>Q9BYQ6</id>
        <label>KRTAP4-11</label>
    </interactant>
    <organismsDiffer>false</organismsDiffer>
    <experiments>9</experiments>
</comment>
<comment type="interaction">
    <interactant intactId="EBI-10171774">
        <id>P60410</id>
    </interactant>
    <interactant intactId="EBI-739863">
        <id>Q9BQ66</id>
        <label>KRTAP4-12</label>
    </interactant>
    <organismsDiffer>false</organismsDiffer>
    <experiments>6</experiments>
</comment>
<comment type="interaction">
    <interactant intactId="EBI-10171774">
        <id>P60410</id>
    </interactant>
    <interactant intactId="EBI-10172511">
        <id>Q9BYR5</id>
        <label>KRTAP4-2</label>
    </interactant>
    <organismsDiffer>false</organismsDiffer>
    <experiments>10</experiments>
</comment>
<comment type="interaction">
    <interactant intactId="EBI-10171774">
        <id>P60410</id>
    </interactant>
    <interactant intactId="EBI-11958132">
        <id>Q9BYR3</id>
        <label>KRTAP4-4</label>
    </interactant>
    <organismsDiffer>false</organismsDiffer>
    <experiments>4</experiments>
</comment>
<comment type="interaction">
    <interactant intactId="EBI-10171774">
        <id>P60410</id>
    </interactant>
    <interactant intactId="EBI-11993254">
        <id>Q9BYR2</id>
        <label>KRTAP4-5</label>
    </interactant>
    <organismsDiffer>false</organismsDiffer>
    <experiments>3</experiments>
</comment>
<comment type="interaction">
    <interactant intactId="EBI-10171774">
        <id>P60410</id>
    </interactant>
    <interactant intactId="EBI-10302547">
        <id>Q9BYR0</id>
        <label>KRTAP4-7</label>
    </interactant>
    <organismsDiffer>false</organismsDiffer>
    <experiments>3</experiments>
</comment>
<comment type="interaction">
    <interactant intactId="EBI-10171774">
        <id>P60410</id>
    </interactant>
    <interactant intactId="EBI-11993296">
        <id>Q6L8G4</id>
        <label>KRTAP5-11</label>
    </interactant>
    <organismsDiffer>false</organismsDiffer>
    <experiments>3</experiments>
</comment>
<comment type="interaction">
    <interactant intactId="EBI-10171774">
        <id>P60410</id>
    </interactant>
    <interactant intactId="EBI-11958178">
        <id>Q701N4</id>
        <label>KRTAP5-2</label>
    </interactant>
    <organismsDiffer>false</organismsDiffer>
    <experiments>3</experiments>
</comment>
<comment type="interaction">
    <interactant intactId="EBI-10171774">
        <id>P60410</id>
    </interactant>
    <interactant intactId="EBI-11974251">
        <id>Q6L8H2</id>
        <label>KRTAP5-3</label>
    </interactant>
    <organismsDiffer>false</organismsDiffer>
    <experiments>3</experiments>
</comment>
<comment type="interaction">
    <interactant intactId="EBI-10171774">
        <id>P60410</id>
    </interactant>
    <interactant intactId="EBI-11963072">
        <id>Q6L8H1</id>
        <label>KRTAP5-4</label>
    </interactant>
    <organismsDiffer>false</organismsDiffer>
    <experiments>3</experiments>
</comment>
<comment type="interaction">
    <interactant intactId="EBI-10171774">
        <id>P60410</id>
    </interactant>
    <interactant intactId="EBI-10250562">
        <id>Q6L8G9</id>
        <label>KRTAP5-6</label>
    </interactant>
    <organismsDiffer>false</organismsDiffer>
    <experiments>8</experiments>
</comment>
<comment type="interaction">
    <interactant intactId="EBI-10171774">
        <id>P60410</id>
    </interactant>
    <interactant intactId="EBI-3958099">
        <id>P26371</id>
        <label>KRTAP5-9</label>
    </interactant>
    <organismsDiffer>false</organismsDiffer>
    <experiments>6</experiments>
</comment>
<comment type="interaction">
    <interactant intactId="EBI-10171774">
        <id>P60410</id>
    </interactant>
    <interactant intactId="EBI-1044640">
        <id>Q9BYQ4</id>
        <label>KRTAP9-2</label>
    </interactant>
    <organismsDiffer>false</organismsDiffer>
    <experiments>11</experiments>
</comment>
<comment type="interaction">
    <interactant intactId="EBI-10171774">
        <id>P60410</id>
    </interactant>
    <interactant intactId="EBI-1043191">
        <id>Q9BYQ3</id>
        <label>KRTAP9-3</label>
    </interactant>
    <organismsDiffer>false</organismsDiffer>
    <experiments>3</experiments>
</comment>
<comment type="interaction">
    <interactant intactId="EBI-10171774">
        <id>P60410</id>
    </interactant>
    <interactant intactId="EBI-10185730">
        <id>Q9BYQ2</id>
        <label>KRTAP9-4</label>
    </interactant>
    <organismsDiffer>false</organismsDiffer>
    <experiments>3</experiments>
</comment>
<comment type="interaction">
    <interactant intactId="EBI-10171774">
        <id>P60410</id>
    </interactant>
    <interactant intactId="EBI-11958364">
        <id>Q9BYQ0</id>
        <label>KRTAP9-8</label>
    </interactant>
    <organismsDiffer>false</organismsDiffer>
    <experiments>5</experiments>
</comment>
<comment type="interaction">
    <interactant intactId="EBI-10171774">
        <id>P60410</id>
    </interactant>
    <interactant intactId="EBI-1052105">
        <id>Q14657</id>
        <label>LAGE3</label>
    </interactant>
    <organismsDiffer>false</organismsDiffer>
    <experiments>3</experiments>
</comment>
<comment type="interaction">
    <interactant intactId="EBI-10171774">
        <id>P60410</id>
    </interactant>
    <interactant intactId="EBI-9088686">
        <id>Q14847-2</id>
        <label>LASP1</label>
    </interactant>
    <organismsDiffer>false</organismsDiffer>
    <experiments>3</experiments>
</comment>
<comment type="interaction">
    <interactant intactId="EBI-10171774">
        <id>P60410</id>
    </interactant>
    <interactant intactId="EBI-11962058">
        <id>Q5T7P2</id>
        <label>LCE1A</label>
    </interactant>
    <organismsDiffer>false</organismsDiffer>
    <experiments>6</experiments>
</comment>
<comment type="interaction">
    <interactant intactId="EBI-10171774">
        <id>P60410</id>
    </interactant>
    <interactant intactId="EBI-10245913">
        <id>Q5T7P3</id>
        <label>LCE1B</label>
    </interactant>
    <organismsDiffer>false</organismsDiffer>
    <experiments>10</experiments>
</comment>
<comment type="interaction">
    <interactant intactId="EBI-10171774">
        <id>P60410</id>
    </interactant>
    <interactant intactId="EBI-12224199">
        <id>Q5T751</id>
        <label>LCE1C</label>
    </interactant>
    <organismsDiffer>false</organismsDiffer>
    <experiments>3</experiments>
</comment>
<comment type="interaction">
    <interactant intactId="EBI-10171774">
        <id>P60410</id>
    </interactant>
    <interactant intactId="EBI-11741311">
        <id>Q5T752</id>
        <label>LCE1D</label>
    </interactant>
    <organismsDiffer>false</organismsDiffer>
    <experiments>3</experiments>
</comment>
<comment type="interaction">
    <interactant intactId="EBI-10171774">
        <id>P60410</id>
    </interactant>
    <interactant intactId="EBI-11955335">
        <id>Q5T753</id>
        <label>LCE1E</label>
    </interactant>
    <organismsDiffer>false</organismsDiffer>
    <experiments>3</experiments>
</comment>
<comment type="interaction">
    <interactant intactId="EBI-10171774">
        <id>P60410</id>
    </interactant>
    <interactant intactId="EBI-11958008">
        <id>Q5T754</id>
        <label>LCE1F</label>
    </interactant>
    <organismsDiffer>false</organismsDiffer>
    <experiments>6</experiments>
</comment>
<comment type="interaction">
    <interactant intactId="EBI-10171774">
        <id>P60410</id>
    </interactant>
    <interactant intactId="EBI-10246607">
        <id>Q5TA79</id>
        <label>LCE2A</label>
    </interactant>
    <organismsDiffer>false</organismsDiffer>
    <experiments>8</experiments>
</comment>
<comment type="interaction">
    <interactant intactId="EBI-10171774">
        <id>P60410</id>
    </interactant>
    <interactant intactId="EBI-11478468">
        <id>O14633</id>
        <label>LCE2B</label>
    </interactant>
    <organismsDiffer>false</organismsDiffer>
    <experiments>6</experiments>
</comment>
<comment type="interaction">
    <interactant intactId="EBI-10171774">
        <id>P60410</id>
    </interactant>
    <interactant intactId="EBI-11973993">
        <id>Q5TA81</id>
        <label>LCE2C</label>
    </interactant>
    <organismsDiffer>false</organismsDiffer>
    <experiments>3</experiments>
</comment>
<comment type="interaction">
    <interactant intactId="EBI-10171774">
        <id>P60410</id>
    </interactant>
    <interactant intactId="EBI-10246750">
        <id>Q5TA82</id>
        <label>LCE2D</label>
    </interactant>
    <organismsDiffer>false</organismsDiffer>
    <experiments>8</experiments>
</comment>
<comment type="interaction">
    <interactant intactId="EBI-10171774">
        <id>P60410</id>
    </interactant>
    <interactant intactId="EBI-9394625">
        <id>Q5TA76</id>
        <label>LCE3A</label>
    </interactant>
    <organismsDiffer>false</organismsDiffer>
    <experiments>5</experiments>
</comment>
<comment type="interaction">
    <interactant intactId="EBI-10171774">
        <id>P60410</id>
    </interactant>
    <interactant intactId="EBI-11974495">
        <id>Q5TA77</id>
        <label>LCE3B</label>
    </interactant>
    <organismsDiffer>false</organismsDiffer>
    <experiments>3</experiments>
</comment>
<comment type="interaction">
    <interactant intactId="EBI-10171774">
        <id>P60410</id>
    </interactant>
    <interactant intactId="EBI-10245291">
        <id>Q5T5A8</id>
        <label>LCE3C</label>
    </interactant>
    <organismsDiffer>false</organismsDiffer>
    <experiments>6</experiments>
</comment>
<comment type="interaction">
    <interactant intactId="EBI-10171774">
        <id>P60410</id>
    </interactant>
    <interactant intactId="EBI-6658837">
        <id>Q9BYE3</id>
        <label>LCE3D</label>
    </interactant>
    <organismsDiffer>false</organismsDiffer>
    <experiments>5</experiments>
</comment>
<comment type="interaction">
    <interactant intactId="EBI-10171774">
        <id>P60410</id>
    </interactant>
    <interactant intactId="EBI-10245456">
        <id>Q5T5B0</id>
        <label>LCE3E</label>
    </interactant>
    <organismsDiffer>false</organismsDiffer>
    <experiments>11</experiments>
</comment>
<comment type="interaction">
    <interactant intactId="EBI-10171774">
        <id>P60410</id>
    </interactant>
    <interactant intactId="EBI-10246358">
        <id>Q5TA78</id>
        <label>LCE4A</label>
    </interactant>
    <organismsDiffer>false</organismsDiffer>
    <experiments>9</experiments>
</comment>
<comment type="interaction">
    <interactant intactId="EBI-10171774">
        <id>P60410</id>
    </interactant>
    <interactant intactId="EBI-11955689">
        <id>Q5TCM9</id>
        <label>LCE5A</label>
    </interactant>
    <organismsDiffer>false</organismsDiffer>
    <experiments>5</experiments>
</comment>
<comment type="interaction">
    <interactant intactId="EBI-10171774">
        <id>P60410</id>
    </interactant>
    <interactant intactId="EBI-18115868">
        <id>Q5T871</id>
        <label>LELP1</label>
    </interactant>
    <organismsDiffer>false</organismsDiffer>
    <experiments>3</experiments>
</comment>
<comment type="interaction">
    <interactant intactId="EBI-10171774">
        <id>P60410</id>
    </interactant>
    <interactant intactId="EBI-726510">
        <id>Q96BZ8</id>
        <label>LENG1</label>
    </interactant>
    <organismsDiffer>false</organismsDiffer>
    <experiments>3</experiments>
</comment>
<comment type="interaction">
    <interactant intactId="EBI-10171774">
        <id>P60410</id>
    </interactant>
    <interactant intactId="EBI-12132296">
        <id>Q9BU23-2</id>
        <label>LMF2</label>
    </interactant>
    <organismsDiffer>false</organismsDiffer>
    <experiments>3</experiments>
</comment>
<comment type="interaction">
    <interactant intactId="EBI-10171774">
        <id>P60410</id>
    </interactant>
    <interactant intactId="EBI-739832">
        <id>Q8TBB1</id>
        <label>LNX1</label>
    </interactant>
    <organismsDiffer>false</organismsDiffer>
    <experiments>3</experiments>
</comment>
<comment type="interaction">
    <interactant intactId="EBI-10171774">
        <id>P60410</id>
    </interactant>
    <interactant intactId="EBI-10239007">
        <id>Q17RD9</id>
        <label>LOC200261</label>
    </interactant>
    <organismsDiffer>false</organismsDiffer>
    <experiments>3</experiments>
</comment>
<comment type="interaction">
    <interactant intactId="EBI-10171774">
        <id>P60410</id>
    </interactant>
    <interactant intactId="EBI-718707">
        <id>O75427</id>
        <label>LRCH4</label>
    </interactant>
    <organismsDiffer>false</organismsDiffer>
    <experiments>3</experiments>
</comment>
<comment type="interaction">
    <interactant intactId="EBI-10171774">
        <id>P60410</id>
    </interactant>
    <interactant intactId="EBI-7910762">
        <id>Q6PJG9</id>
        <label>LRFN4</label>
    </interactant>
    <organismsDiffer>false</organismsDiffer>
    <experiments>3</experiments>
</comment>
<comment type="interaction">
    <interactant intactId="EBI-10171774">
        <id>P60410</id>
    </interactant>
    <interactant intactId="EBI-10198848">
        <id>Q9P127</id>
        <label>LUZP4</label>
    </interactant>
    <organismsDiffer>false</organismsDiffer>
    <experiments>3</experiments>
</comment>
<comment type="interaction">
    <interactant intactId="EBI-10171774">
        <id>P60410</id>
    </interactant>
    <interactant intactId="EBI-10329546">
        <id>Q9Y5Y7</id>
        <label>LYVE1</label>
    </interactant>
    <organismsDiffer>false</organismsDiffer>
    <experiments>3</experiments>
</comment>
<comment type="interaction">
    <interactant intactId="EBI-10171774">
        <id>P60410</id>
    </interactant>
    <interactant intactId="EBI-2868511">
        <id>O75367</id>
        <label>MACROH2A1</label>
    </interactant>
    <organismsDiffer>false</organismsDiffer>
    <experiments>3</experiments>
</comment>
<comment type="interaction">
    <interactant intactId="EBI-10171774">
        <id>P60410</id>
    </interactant>
    <interactant intactId="EBI-947402">
        <id>O60336</id>
        <label>MAPKBP1</label>
    </interactant>
    <organismsDiffer>false</organismsDiffer>
    <experiments>8</experiments>
</comment>
<comment type="interaction">
    <interactant intactId="EBI-10171774">
        <id>P60410</id>
    </interactant>
    <interactant intactId="EBI-6262458">
        <id>O15232</id>
        <label>MATN3</label>
    </interactant>
    <organismsDiffer>false</organismsDiffer>
    <experiments>3</experiments>
</comment>
<comment type="interaction">
    <interactant intactId="EBI-10171774">
        <id>P60410</id>
    </interactant>
    <interactant intactId="EBI-8025850">
        <id>O14770-4</id>
        <label>MEIS2</label>
    </interactant>
    <organismsDiffer>false</organismsDiffer>
    <experiments>3</experiments>
</comment>
<comment type="interaction">
    <interactant intactId="EBI-10171774">
        <id>P60410</id>
    </interactant>
    <interactant intactId="EBI-10195914">
        <id>P08582-2</id>
        <label>MELTF</label>
    </interactant>
    <organismsDiffer>false</organismsDiffer>
    <experiments>3</experiments>
</comment>
<comment type="interaction">
    <interactant intactId="EBI-10171774">
        <id>P60410</id>
    </interactant>
    <interactant intactId="EBI-748397">
        <id>P50222</id>
        <label>MEOX2</label>
    </interactant>
    <organismsDiffer>false</organismsDiffer>
    <experiments>3</experiments>
</comment>
<comment type="interaction">
    <interactant intactId="EBI-10171774">
        <id>P60410</id>
    </interactant>
    <interactant intactId="EBI-16439278">
        <id>Q6FHY5</id>
        <label>MEOX2</label>
    </interactant>
    <organismsDiffer>false</organismsDiffer>
    <experiments>3</experiments>
</comment>
<comment type="interaction">
    <interactant intactId="EBI-10171774">
        <id>P60410</id>
    </interactant>
    <interactant intactId="EBI-5773143">
        <id>Q6P2C6</id>
        <label>MLLT6</label>
    </interactant>
    <organismsDiffer>false</organismsDiffer>
    <experiments>3</experiments>
</comment>
<comment type="interaction">
    <interactant intactId="EBI-10171774">
        <id>P60410</id>
    </interactant>
    <interactant intactId="EBI-10230628">
        <id>Q13875</id>
        <label>MOBP</label>
    </interactant>
    <organismsDiffer>false</organismsDiffer>
    <experiments>3</experiments>
</comment>
<comment type="interaction">
    <interactant intactId="EBI-10171774">
        <id>P60410</id>
    </interactant>
    <interactant intactId="EBI-12013470">
        <id>Q13875-3</id>
        <label>MOBP</label>
    </interactant>
    <organismsDiffer>false</organismsDiffer>
    <experiments>3</experiments>
</comment>
<comment type="interaction">
    <interactant intactId="EBI-10171774">
        <id>P60410</id>
    </interactant>
    <interactant intactId="EBI-714236">
        <id>Q13330</id>
        <label>MTA1</label>
    </interactant>
    <organismsDiffer>false</organismsDiffer>
    <experiments>3</experiments>
</comment>
<comment type="interaction">
    <interactant intactId="EBI-10171774">
        <id>P60410</id>
    </interactant>
    <interactant intactId="EBI-744120">
        <id>Q969V5</id>
        <label>MUL1</label>
    </interactant>
    <organismsDiffer>false</organismsDiffer>
    <experiments>3</experiments>
</comment>
<comment type="interaction">
    <interactant intactId="EBI-10171774">
        <id>P60410</id>
    </interactant>
    <interactant intactId="EBI-10211940">
        <id>P50539-3</id>
        <label>MXI1</label>
    </interactant>
    <organismsDiffer>false</organismsDiffer>
    <experiments>6</experiments>
</comment>
<comment type="interaction">
    <interactant intactId="EBI-10171774">
        <id>P60410</id>
    </interactant>
    <interactant intactId="EBI-2858213">
        <id>Q86VE0</id>
        <label>MYPOP</label>
    </interactant>
    <organismsDiffer>false</organismsDiffer>
    <experiments>3</experiments>
</comment>
<comment type="interaction">
    <interactant intactId="EBI-10171774">
        <id>P60410</id>
    </interactant>
    <interactant intactId="EBI-8641936">
        <id>Q15742</id>
        <label>NAB2</label>
    </interactant>
    <organismsDiffer>false</organismsDiffer>
    <experiments>3</experiments>
</comment>
<comment type="interaction">
    <interactant intactId="EBI-10171774">
        <id>P60410</id>
    </interactant>
    <interactant intactId="EBI-8650724">
        <id>Q8IW45</id>
        <label>NAXD</label>
    </interactant>
    <organismsDiffer>false</organismsDiffer>
    <experiments>6</experiments>
</comment>
<comment type="interaction">
    <interactant intactId="EBI-10171774">
        <id>P60410</id>
    </interactant>
    <interactant intactId="EBI-6979889">
        <id>Q92692-2</id>
        <label>NECTIN2</label>
    </interactant>
    <organismsDiffer>false</organismsDiffer>
    <experiments>3</experiments>
</comment>
<comment type="interaction">
    <interactant intactId="EBI-10171774">
        <id>P60410</id>
    </interactant>
    <interactant intactId="EBI-2826725">
        <id>Q9NQS3</id>
        <label>NECTIN3</label>
    </interactant>
    <organismsDiffer>false</organismsDiffer>
    <experiments>3</experiments>
</comment>
<comment type="interaction">
    <interactant intactId="EBI-10171774">
        <id>P60410</id>
    </interactant>
    <interactant intactId="EBI-12106440">
        <id>Q9NQS3-2</id>
        <label>NECTIN3</label>
    </interactant>
    <organismsDiffer>false</organismsDiffer>
    <experiments>3</experiments>
</comment>
<comment type="interaction">
    <interactant intactId="EBI-10171774">
        <id>P60410</id>
    </interactant>
    <interactant intactId="EBI-11750983">
        <id>Q9HC98-4</id>
        <label>NEK6</label>
    </interactant>
    <organismsDiffer>false</organismsDiffer>
    <experiments>3</experiments>
</comment>
<comment type="interaction">
    <interactant intactId="EBI-10171774">
        <id>P60410</id>
    </interactant>
    <interactant intactId="EBI-1538217">
        <id>Q969G9</id>
        <label>NKD1</label>
    </interactant>
    <organismsDiffer>false</organismsDiffer>
    <experiments>3</experiments>
</comment>
<comment type="interaction">
    <interactant intactId="EBI-10171774">
        <id>P60410</id>
    </interactant>
    <interactant intactId="EBI-945833">
        <id>Q7Z3S9</id>
        <label>NOTCH2NLA</label>
    </interactant>
    <organismsDiffer>false</organismsDiffer>
    <experiments>3</experiments>
</comment>
<comment type="interaction">
    <interactant intactId="EBI-10171774">
        <id>P60410</id>
    </interactant>
    <interactant intactId="EBI-22310682">
        <id>P0DPK4</id>
        <label>NOTCH2NLC</label>
    </interactant>
    <organismsDiffer>false</organismsDiffer>
    <experiments>3</experiments>
</comment>
<comment type="interaction">
    <interactant intactId="EBI-10171774">
        <id>P60410</id>
    </interactant>
    <interactant intactId="EBI-748927">
        <id>Q9NQX5</id>
        <label>NPDC1</label>
    </interactant>
    <organismsDiffer>false</organismsDiffer>
    <experiments>3</experiments>
</comment>
<comment type="interaction">
    <interactant intactId="EBI-10171774">
        <id>P60410</id>
    </interactant>
    <interactant intactId="EBI-10250949">
        <id>Q6NSM0</id>
        <label>NR1D2</label>
    </interactant>
    <organismsDiffer>false</organismsDiffer>
    <experiments>8</experiments>
</comment>
<comment type="interaction">
    <interactant intactId="EBI-10171774">
        <id>P60410</id>
    </interactant>
    <interactant intactId="EBI-13644623">
        <id>Q92570</id>
        <label>NR4A3</label>
    </interactant>
    <organismsDiffer>false</organismsDiffer>
    <experiments>3</experiments>
</comment>
<comment type="interaction">
    <interactant intactId="EBI-10171774">
        <id>P60410</id>
    </interactant>
    <interactant intactId="EBI-743459">
        <id>Q9HB63</id>
        <label>NTN4</label>
    </interactant>
    <organismsDiffer>false</organismsDiffer>
    <experiments>3</experiments>
</comment>
<comment type="interaction">
    <interactant intactId="EBI-10171774">
        <id>P60410</id>
    </interactant>
    <interactant intactId="EBI-1210753">
        <id>Q7Z417</id>
        <label>NUFIP2</label>
    </interactant>
    <organismsDiffer>false</organismsDiffer>
    <experiments>6</experiments>
</comment>
<comment type="interaction">
    <interactant intactId="EBI-10171774">
        <id>P60410</id>
    </interactant>
    <interactant intactId="EBI-10225049">
        <id>Q7RTU3</id>
        <label>OLIG3</label>
    </interactant>
    <organismsDiffer>false</organismsDiffer>
    <experiments>5</experiments>
</comment>
<comment type="interaction">
    <interactant intactId="EBI-10171774">
        <id>P60410</id>
    </interactant>
    <interactant intactId="EBI-6447201">
        <id>Q14982</id>
        <label>OPCML</label>
    </interactant>
    <organismsDiffer>false</organismsDiffer>
    <experiments>3</experiments>
</comment>
<comment type="interaction">
    <interactant intactId="EBI-10171774">
        <id>P60410</id>
    </interactant>
    <interactant intactId="EBI-740446">
        <id>P32242</id>
        <label>OTX1</label>
    </interactant>
    <organismsDiffer>false</organismsDiffer>
    <experiments>8</experiments>
</comment>
<comment type="interaction">
    <interactant intactId="EBI-10171774">
        <id>P60410</id>
    </interactant>
    <interactant intactId="EBI-1753251">
        <id>Q99572</id>
        <label>P2RX7</label>
    </interactant>
    <organismsDiffer>false</organismsDiffer>
    <experiments>3</experiments>
</comment>
<comment type="interaction">
    <interactant intactId="EBI-10171774">
        <id>P60410</id>
    </interactant>
    <interactant intactId="EBI-10235794">
        <id>Q15077</id>
        <label>P2RY6</label>
    </interactant>
    <organismsDiffer>false</organismsDiffer>
    <experiments>3</experiments>
</comment>
<comment type="interaction">
    <interactant intactId="EBI-10171774">
        <id>P60410</id>
    </interactant>
    <interactant intactId="EBI-296331">
        <id>Q02548</id>
        <label>PAX5</label>
    </interactant>
    <organismsDiffer>false</organismsDiffer>
    <experiments>3</experiments>
</comment>
<comment type="interaction">
    <interactant intactId="EBI-10171774">
        <id>P60410</id>
    </interactant>
    <interactant intactId="EBI-748452">
        <id>Q9H1Q7</id>
        <label>PCED1A</label>
    </interactant>
    <organismsDiffer>false</organismsDiffer>
    <experiments>3</experiments>
</comment>
<comment type="interaction">
    <interactant intactId="EBI-10171774">
        <id>P60410</id>
    </interactant>
    <interactant intactId="EBI-751290">
        <id>Q92824</id>
        <label>PCSK5</label>
    </interactant>
    <organismsDiffer>false</organismsDiffer>
    <experiments>3</experiments>
</comment>
<comment type="interaction">
    <interactant intactId="EBI-10171774">
        <id>P60410</id>
    </interactant>
    <interactant intactId="EBI-11956269">
        <id>Q92824-2</id>
        <label>PCSK5</label>
    </interactant>
    <organismsDiffer>false</organismsDiffer>
    <experiments>6</experiments>
</comment>
<comment type="interaction">
    <interactant intactId="EBI-10171774">
        <id>P60410</id>
    </interactant>
    <interactant intactId="EBI-742764">
        <id>O76083</id>
        <label>PDE9A</label>
    </interactant>
    <organismsDiffer>false</organismsDiffer>
    <experiments>3</experiments>
</comment>
<comment type="interaction">
    <interactant intactId="EBI-10171774">
        <id>P60410</id>
    </interactant>
    <interactant intactId="EBI-11524542">
        <id>O76083-2</id>
        <label>PDE9A</label>
    </interactant>
    <organismsDiffer>false</organismsDiffer>
    <experiments>3</experiments>
</comment>
<comment type="interaction">
    <interactant intactId="EBI-10171774">
        <id>P60410</id>
    </interactant>
    <interactant intactId="EBI-1054653">
        <id>P13667</id>
        <label>PDIA4</label>
    </interactant>
    <organismsDiffer>false</organismsDiffer>
    <experiments>3</experiments>
</comment>
<comment type="interaction">
    <interactant intactId="EBI-10171774">
        <id>P60410</id>
    </interactant>
    <interactant intactId="EBI-10310808">
        <id>Q9HCN3</id>
        <label>PGAP6</label>
    </interactant>
    <organismsDiffer>false</organismsDiffer>
    <experiments>3</experiments>
</comment>
<comment type="interaction">
    <interactant intactId="EBI-10171774">
        <id>P60410</id>
    </interactant>
    <interactant intactId="EBI-14084211">
        <id>A2BDE7</id>
        <label>PHLDA1</label>
    </interactant>
    <organismsDiffer>false</organismsDiffer>
    <experiments>3</experiments>
</comment>
<comment type="interaction">
    <interactant intactId="EBI-10171774">
        <id>P60410</id>
    </interactant>
    <interactant intactId="EBI-2908273">
        <id>Q96S52</id>
        <label>PIGS</label>
    </interactant>
    <organismsDiffer>false</organismsDiffer>
    <experiments>3</experiments>
</comment>
<comment type="interaction">
    <interactant intactId="EBI-10171774">
        <id>P60410</id>
    </interactant>
    <interactant intactId="EBI-714158">
        <id>Q13526</id>
        <label>PIN1</label>
    </interactant>
    <organismsDiffer>false</organismsDiffer>
    <experiments>3</experiments>
</comment>
<comment type="interaction">
    <interactant intactId="EBI-10171774">
        <id>P60410</id>
    </interactant>
    <interactant intactId="EBI-7813714">
        <id>Q13563</id>
        <label>PKD2</label>
    </interactant>
    <organismsDiffer>false</organismsDiffer>
    <experiments>3</experiments>
</comment>
<comment type="interaction">
    <interactant intactId="EBI-10171774">
        <id>P60410</id>
    </interactant>
    <interactant intactId="EBI-769257">
        <id>Q9NRQ2</id>
        <label>PLSCR4</label>
    </interactant>
    <organismsDiffer>false</organismsDiffer>
    <experiments>3</experiments>
</comment>
<comment type="interaction">
    <interactant intactId="EBI-10171774">
        <id>P60410</id>
    </interactant>
    <interactant intactId="EBI-8673859">
        <id>P28069</id>
        <label>POU1F1</label>
    </interactant>
    <organismsDiffer>false</organismsDiffer>
    <experiments>3</experiments>
</comment>
<comment type="interaction">
    <interactant intactId="EBI-10171774">
        <id>P60410</id>
    </interactant>
    <interactant intactId="EBI-17236143">
        <id>Q12837</id>
        <label>POU4F2</label>
    </interactant>
    <organismsDiffer>false</organismsDiffer>
    <experiments>3</experiments>
</comment>
<comment type="interaction">
    <interactant intactId="EBI-10171774">
        <id>P60410</id>
    </interactant>
    <interactant intactId="EBI-1053424">
        <id>O43741</id>
        <label>PRKAB2</label>
    </interactant>
    <organismsDiffer>false</organismsDiffer>
    <experiments>6</experiments>
</comment>
<comment type="interaction">
    <interactant intactId="EBI-10171774">
        <id>P60410</id>
    </interactant>
    <interactant intactId="EBI-1567797">
        <id>Q8WWY3</id>
        <label>PRPF31</label>
    </interactant>
    <organismsDiffer>false</organismsDiffer>
    <experiments>9</experiments>
</comment>
<comment type="interaction">
    <interactant intactId="EBI-10171774">
        <id>P60410</id>
    </interactant>
    <interactant intactId="EBI-740924">
        <id>Q9NZ81</id>
        <label>PRR13</label>
    </interactant>
    <organismsDiffer>false</organismsDiffer>
    <experiments>6</experiments>
</comment>
<comment type="interaction">
    <interactant intactId="EBI-10171774">
        <id>P60410</id>
    </interactant>
    <interactant intactId="EBI-11998870">
        <id>A6NJB7-2</id>
        <label>PRR19</label>
    </interactant>
    <organismsDiffer>false</organismsDiffer>
    <experiments>3</experiments>
</comment>
<comment type="interaction">
    <interactant intactId="EBI-10171774">
        <id>P60410</id>
    </interactant>
    <interactant intactId="EBI-10234038">
        <id>P43115-12</id>
        <label>PTGER3</label>
    </interactant>
    <organismsDiffer>false</organismsDiffer>
    <experiments>3</experiments>
</comment>
<comment type="interaction">
    <interactant intactId="EBI-10171774">
        <id>P60410</id>
    </interactant>
    <interactant intactId="EBI-2803245">
        <id>Q13308</id>
        <label>PTK7</label>
    </interactant>
    <organismsDiffer>false</organismsDiffer>
    <experiments>3</experiments>
</comment>
<comment type="interaction">
    <interactant intactId="EBI-10171774">
        <id>P60410</id>
    </interactant>
    <interactant intactId="EBI-7199479">
        <id>Q8WUK0</id>
        <label>PTPMT1</label>
    </interactant>
    <organismsDiffer>false</organismsDiffer>
    <experiments>6</experiments>
</comment>
<comment type="interaction">
    <interactant intactId="EBI-10171774">
        <id>P60410</id>
    </interactant>
    <interactant intactId="EBI-1267176">
        <id>Q9HD43</id>
        <label>PTPRH</label>
    </interactant>
    <organismsDiffer>false</organismsDiffer>
    <experiments>3</experiments>
</comment>
<comment type="interaction">
    <interactant intactId="EBI-10171774">
        <id>P60410</id>
    </interactant>
    <interactant intactId="EBI-3919694">
        <id>P15151</id>
        <label>PVR</label>
    </interactant>
    <organismsDiffer>false</organismsDiffer>
    <experiments>6</experiments>
</comment>
<comment type="interaction">
    <interactant intactId="EBI-10171774">
        <id>P60410</id>
    </interactant>
    <interactant intactId="EBI-739851">
        <id>Q15274</id>
        <label>QPRT</label>
    </interactant>
    <organismsDiffer>false</organismsDiffer>
    <experiments>3</experiments>
</comment>
<comment type="interaction">
    <interactant intactId="EBI-10171774">
        <id>P60410</id>
    </interactant>
    <interactant intactId="EBI-948428">
        <id>Q9Y2K5</id>
        <label>R3HDM2</label>
    </interactant>
    <organismsDiffer>false</organismsDiffer>
    <experiments>5</experiments>
</comment>
<comment type="interaction">
    <interactant intactId="EBI-10171774">
        <id>P60410</id>
    </interactant>
    <interactant intactId="EBI-10326419">
        <id>Q9Y2K5-2</id>
        <label>R3HDM2</label>
    </interactant>
    <organismsDiffer>false</organismsDiffer>
    <experiments>3</experiments>
</comment>
<comment type="interaction">
    <interactant intactId="EBI-10171774">
        <id>P60410</id>
    </interactant>
    <interactant intactId="EBI-4401710">
        <id>A4D1S5</id>
        <label>RAB19</label>
    </interactant>
    <organismsDiffer>false</organismsDiffer>
    <experiments>3</experiments>
</comment>
<comment type="interaction">
    <interactant intactId="EBI-10171774">
        <id>P60410</id>
    </interactant>
    <interactant intactId="EBI-1045943">
        <id>P20336</id>
        <label>RAB3A</label>
    </interactant>
    <organismsDiffer>false</organismsDiffer>
    <experiments>3</experiments>
</comment>
<comment type="interaction">
    <interactant intactId="EBI-10171774">
        <id>P60410</id>
    </interactant>
    <interactant intactId="EBI-12005546">
        <id>Q12967-6</id>
        <label>RALGDS</label>
    </interactant>
    <organismsDiffer>false</organismsDiffer>
    <experiments>3</experiments>
</comment>
<comment type="interaction">
    <interactant intactId="EBI-10171774">
        <id>P60410</id>
    </interactant>
    <interactant intactId="EBI-740818">
        <id>Q9Y272</id>
        <label>RASD1</label>
    </interactant>
    <organismsDiffer>false</organismsDiffer>
    <experiments>3</experiments>
</comment>
<comment type="interaction">
    <interactant intactId="EBI-10171774">
        <id>P60410</id>
    </interactant>
    <interactant intactId="EBI-10253121">
        <id>Q6P9E2</id>
        <label>RECK</label>
    </interactant>
    <organismsDiffer>false</organismsDiffer>
    <experiments>3</experiments>
</comment>
<comment type="interaction">
    <interactant intactId="EBI-10171774">
        <id>P60410</id>
    </interactant>
    <interactant intactId="EBI-712355">
        <id>O15211</id>
        <label>RGL2</label>
    </interactant>
    <organismsDiffer>false</organismsDiffer>
    <experiments>3</experiments>
</comment>
<comment type="interaction">
    <interactant intactId="EBI-10171774">
        <id>P60410</id>
    </interactant>
    <interactant intactId="EBI-12104986">
        <id>O75783</id>
        <label>RHBDL1</label>
    </interactant>
    <organismsDiffer>false</organismsDiffer>
    <experiments>3</experiments>
</comment>
<comment type="interaction">
    <interactant intactId="EBI-10171774">
        <id>P60410</id>
    </interactant>
    <interactant intactId="EBI-9658624">
        <id>Q9BSD3</id>
        <label>RHNO1</label>
    </interactant>
    <organismsDiffer>false</organismsDiffer>
    <experiments>3</experiments>
</comment>
<comment type="interaction">
    <interactant intactId="EBI-10171774">
        <id>P60410</id>
    </interactant>
    <interactant intactId="EBI-2341200">
        <id>Q9H0F5</id>
        <label>RNF38</label>
    </interactant>
    <organismsDiffer>false</organismsDiffer>
    <experiments>3</experiments>
</comment>
<comment type="interaction">
    <interactant intactId="EBI-10171774">
        <id>P60410</id>
    </interactant>
    <interactant intactId="EBI-373337">
        <id>O76064</id>
        <label>RNF8</label>
    </interactant>
    <organismsDiffer>false</organismsDiffer>
    <experiments>3</experiments>
</comment>
<comment type="interaction">
    <interactant intactId="EBI-10171774">
        <id>P60410</id>
    </interactant>
    <interactant intactId="EBI-4479407">
        <id>Q86WX3</id>
        <label>RPS19BP1</label>
    </interactant>
    <organismsDiffer>false</organismsDiffer>
    <experiments>3</experiments>
</comment>
<comment type="interaction">
    <interactant intactId="EBI-10171774">
        <id>P60410</id>
    </interactant>
    <interactant intactId="EBI-353027">
        <id>P62857</id>
        <label>RPS28</label>
    </interactant>
    <organismsDiffer>false</organismsDiffer>
    <experiments>3</experiments>
</comment>
<comment type="interaction">
    <interactant intactId="EBI-10171774">
        <id>P60410</id>
    </interactant>
    <interactant intactId="EBI-10258951">
        <id>Q86UN2</id>
        <label>RTN4RL1</label>
    </interactant>
    <organismsDiffer>false</organismsDiffer>
    <experiments>3</experiments>
</comment>
<comment type="interaction">
    <interactant intactId="EBI-10171774">
        <id>P60410</id>
    </interactant>
    <interactant intactId="EBI-12056025">
        <id>Q14162</id>
        <label>SCARF1</label>
    </interactant>
    <organismsDiffer>false</organismsDiffer>
    <experiments>3</experiments>
</comment>
<comment type="interaction">
    <interactant intactId="EBI-10171774">
        <id>P60410</id>
    </interactant>
    <interactant intactId="EBI-748391">
        <id>Q9BWG6</id>
        <label>SCNM1</label>
    </interactant>
    <organismsDiffer>false</organismsDiffer>
    <experiments>6</experiments>
</comment>
<comment type="interaction">
    <interactant intactId="EBI-10171774">
        <id>P60410</id>
    </interactant>
    <interactant intactId="EBI-11017428">
        <id>Q13214-2</id>
        <label>SEMA3B</label>
    </interactant>
    <organismsDiffer>false</organismsDiffer>
    <experiments>3</experiments>
</comment>
<comment type="interaction">
    <interactant intactId="EBI-10171774">
        <id>P60410</id>
    </interactant>
    <interactant intactId="EBI-749607">
        <id>Q9NR46</id>
        <label>SH3GLB2</label>
    </interactant>
    <organismsDiffer>false</organismsDiffer>
    <experiments>3</experiments>
</comment>
<comment type="interaction">
    <interactant intactId="EBI-10171774">
        <id>P60410</id>
    </interactant>
    <interactant intactId="EBI-10313866">
        <id>Q9NUL5</id>
        <label>SHFL</label>
    </interactant>
    <organismsDiffer>false</organismsDiffer>
    <experiments>3</experiments>
</comment>
<comment type="interaction">
    <interactant intactId="EBI-10171774">
        <id>P60410</id>
    </interactant>
    <interactant intactId="EBI-11955083">
        <id>Q9NUL5-4</id>
        <label>SHFL</label>
    </interactant>
    <organismsDiffer>false</organismsDiffer>
    <experiments>3</experiments>
</comment>
<comment type="interaction">
    <interactant intactId="EBI-10171774">
        <id>P60410</id>
    </interactant>
    <interactant intactId="EBI-12002412">
        <id>Q86YT5</id>
        <label>SLC13A5</label>
    </interactant>
    <organismsDiffer>false</organismsDiffer>
    <experiments>3</experiments>
</comment>
<comment type="interaction">
    <interactant intactId="EBI-10171774">
        <id>P60410</id>
    </interactant>
    <interactant intactId="EBI-10171756">
        <id>A1A5C7</id>
        <label>SLC22A23</label>
    </interactant>
    <organismsDiffer>false</organismsDiffer>
    <experiments>3</experiments>
</comment>
<comment type="interaction">
    <interactant intactId="EBI-10171774">
        <id>P60410</id>
    </interactant>
    <interactant intactId="EBI-1759386">
        <id>Q9UHI7</id>
        <label>SLC23A1</label>
    </interactant>
    <organismsDiffer>false</organismsDiffer>
    <experiments>4</experiments>
</comment>
<comment type="interaction">
    <interactant intactId="EBI-10171774">
        <id>P60410</id>
    </interactant>
    <interactant intactId="EBI-11998660">
        <id>Q9UHI7-3</id>
        <label>SLC23A1</label>
    </interactant>
    <organismsDiffer>false</organismsDiffer>
    <experiments>3</experiments>
</comment>
<comment type="interaction">
    <interactant intactId="EBI-10171774">
        <id>P60410</id>
    </interactant>
    <interactant intactId="EBI-750394">
        <id>Q9UBX3</id>
        <label>SLC25A10</label>
    </interactant>
    <organismsDiffer>false</organismsDiffer>
    <experiments>3</experiments>
</comment>
<comment type="interaction">
    <interactant intactId="EBI-10171774">
        <id>P60410</id>
    </interactant>
    <interactant intactId="EBI-6149672">
        <id>Q9H0C2</id>
        <label>SLC25A31</label>
    </interactant>
    <organismsDiffer>false</organismsDiffer>
    <experiments>3</experiments>
</comment>
<comment type="interaction">
    <interactant intactId="EBI-10171774">
        <id>P60410</id>
    </interactant>
    <interactant intactId="EBI-6598313">
        <id>Q86VD7</id>
        <label>SLC25A42</label>
    </interactant>
    <organismsDiffer>false</organismsDiffer>
    <experiments>3</experiments>
</comment>
<comment type="interaction">
    <interactant intactId="EBI-10171774">
        <id>P60410</id>
    </interactant>
    <interactant intactId="EBI-10311198">
        <id>Q9NP91</id>
        <label>SLC6A20</label>
    </interactant>
    <organismsDiffer>false</organismsDiffer>
    <experiments>6</experiments>
</comment>
<comment type="interaction">
    <interactant intactId="EBI-10171774">
        <id>P60410</id>
    </interactant>
    <interactant intactId="EBI-947791">
        <id>O75093</id>
        <label>SLIT1</label>
    </interactant>
    <organismsDiffer>false</organismsDiffer>
    <experiments>3</experiments>
</comment>
<comment type="interaction">
    <interactant intactId="EBI-10171774">
        <id>P60410</id>
    </interactant>
    <interactant intactId="EBI-455078">
        <id>Q969G3</id>
        <label>SMARCE1</label>
    </interactant>
    <organismsDiffer>false</organismsDiffer>
    <experiments>3</experiments>
</comment>
<comment type="interaction">
    <interactant intactId="EBI-10171774">
        <id>P60410</id>
    </interactant>
    <interactant intactId="EBI-750494">
        <id>P49901</id>
        <label>SMCP</label>
    </interactant>
    <organismsDiffer>false</organismsDiffer>
    <experiments>9</experiments>
</comment>
<comment type="interaction">
    <interactant intactId="EBI-10171774">
        <id>P60410</id>
    </interactant>
    <interactant intactId="EBI-2872322">
        <id>Q9H0W8</id>
        <label>SMG9</label>
    </interactant>
    <organismsDiffer>false</organismsDiffer>
    <experiments>3</experiments>
</comment>
<comment type="interaction">
    <interactant intactId="EBI-10171774">
        <id>P60410</id>
    </interactant>
    <interactant intactId="EBI-2801103">
        <id>Q9H4F8</id>
        <label>SMOC1</label>
    </interactant>
    <organismsDiffer>false</organismsDiffer>
    <experiments>3</experiments>
</comment>
<comment type="interaction">
    <interactant intactId="EBI-10171774">
        <id>P60410</id>
    </interactant>
    <interactant intactId="EBI-722584">
        <id>Q96E40</id>
        <label>SPACA9</label>
    </interactant>
    <organismsDiffer>false</organismsDiffer>
    <experiments>3</experiments>
</comment>
<comment type="interaction">
    <interactant intactId="EBI-10171774">
        <id>P60410</id>
    </interactant>
    <interactant intactId="EBI-11959123">
        <id>Q99932-2</id>
        <label>SPAG8</label>
    </interactant>
    <organismsDiffer>false</organismsDiffer>
    <experiments>3</experiments>
</comment>
<comment type="interaction">
    <interactant intactId="EBI-10171774">
        <id>P60410</id>
    </interactant>
    <interactant intactId="EBI-12041693">
        <id>Q86W54-2</id>
        <label>SPATA24</label>
    </interactant>
    <organismsDiffer>false</organismsDiffer>
    <experiments>3</experiments>
</comment>
<comment type="interaction">
    <interactant intactId="EBI-10171774">
        <id>P60410</id>
    </interactant>
    <interactant intactId="EBI-3866665">
        <id>O43609</id>
        <label>SPRY1</label>
    </interactant>
    <organismsDiffer>false</organismsDiffer>
    <experiments>6</experiments>
</comment>
<comment type="interaction">
    <interactant intactId="EBI-10171774">
        <id>P60410</id>
    </interactant>
    <interactant intactId="EBI-742487">
        <id>O43597</id>
        <label>SPRY2</label>
    </interactant>
    <organismsDiffer>false</organismsDiffer>
    <experiments>3</experiments>
</comment>
<comment type="interaction">
    <interactant intactId="EBI-10171774">
        <id>P60410</id>
    </interactant>
    <interactant intactId="EBI-749295">
        <id>O75716</id>
        <label>STK16</label>
    </interactant>
    <organismsDiffer>false</organismsDiffer>
    <experiments>6</experiments>
</comment>
<comment type="interaction">
    <interactant intactId="EBI-10171774">
        <id>P60410</id>
    </interactant>
    <interactant intactId="EBI-1054721">
        <id>Q9UGT4</id>
        <label>SUSD2</label>
    </interactant>
    <organismsDiffer>false</organismsDiffer>
    <experiments>3</experiments>
</comment>
<comment type="interaction">
    <interactant intactId="EBI-10171774">
        <id>P60410</id>
    </interactant>
    <interactant intactId="EBI-2866213">
        <id>Q92537</id>
        <label>SUSD6</label>
    </interactant>
    <organismsDiffer>false</organismsDiffer>
    <experiments>6</experiments>
</comment>
<comment type="interaction">
    <interactant intactId="EBI-10171774">
        <id>P60410</id>
    </interactant>
    <interactant intactId="EBI-349968">
        <id>O43463</id>
        <label>SUV39H1</label>
    </interactant>
    <organismsDiffer>false</organismsDiffer>
    <experiments>3</experiments>
</comment>
<comment type="interaction">
    <interactant intactId="EBI-10171774">
        <id>P60410</id>
    </interactant>
    <interactant intactId="EBI-4324738">
        <id>P09758</id>
        <label>TACSTD2</label>
    </interactant>
    <organismsDiffer>false</organismsDiffer>
    <experiments>3</experiments>
</comment>
<comment type="interaction">
    <interactant intactId="EBI-10171774">
        <id>P60410</id>
    </interactant>
    <interactant intactId="EBI-12017416">
        <id>Q9BX59</id>
        <label>TAPBPL</label>
    </interactant>
    <organismsDiffer>false</organismsDiffer>
    <experiments>3</experiments>
</comment>
<comment type="interaction">
    <interactant intactId="EBI-10171774">
        <id>P60410</id>
    </interactant>
    <interactant intactId="EBI-2853126">
        <id>Q9NUY8</id>
        <label>TBC1D23</label>
    </interactant>
    <organismsDiffer>false</organismsDiffer>
    <experiments>3</experiments>
</comment>
<comment type="interaction">
    <interactant intactId="EBI-10171774">
        <id>P60410</id>
    </interactant>
    <interactant intactId="EBI-11974855">
        <id>Q9Y4C2-2</id>
        <label>TCAF1</label>
    </interactant>
    <organismsDiffer>false</organismsDiffer>
    <experiments>3</experiments>
</comment>
<comment type="interaction">
    <interactant intactId="EBI-10171774">
        <id>P60410</id>
    </interactant>
    <interactant intactId="EBI-710310">
        <id>Q15560</id>
        <label>TCEA2</label>
    </interactant>
    <organismsDiffer>false</organismsDiffer>
    <experiments>3</experiments>
</comment>
<comment type="interaction">
    <interactant intactId="EBI-10171774">
        <id>P60410</id>
    </interactant>
    <interactant intactId="EBI-11955057">
        <id>Q8N8B7-2</id>
        <label>TCEANC</label>
    </interactant>
    <organismsDiffer>false</organismsDiffer>
    <experiments>3</experiments>
</comment>
<comment type="interaction">
    <interactant intactId="EBI-10171774">
        <id>P60410</id>
    </interactant>
    <interactant intactId="EBI-11952651">
        <id>Q7Z6R9</id>
        <label>TFAP2D</label>
    </interactant>
    <organismsDiffer>false</organismsDiffer>
    <experiments>5</experiments>
</comment>
<comment type="interaction">
    <interactant intactId="EBI-10171774">
        <id>P60410</id>
    </interactant>
    <interactant intactId="EBI-779636">
        <id>P01137</id>
        <label>TGFB1</label>
    </interactant>
    <organismsDiffer>false</organismsDiffer>
    <experiments>3</experiments>
</comment>
<comment type="interaction">
    <interactant intactId="EBI-10171774">
        <id>P60410</id>
    </interactant>
    <interactant intactId="EBI-745404">
        <id>Q9P2Z0</id>
        <label>THAP10</label>
    </interactant>
    <organismsDiffer>false</organismsDiffer>
    <experiments>3</experiments>
</comment>
<comment type="interaction">
    <interactant intactId="EBI-10171774">
        <id>P60410</id>
    </interactant>
    <interactant intactId="EBI-741350">
        <id>Q9BT49</id>
        <label>THAP7</label>
    </interactant>
    <organismsDiffer>false</organismsDiffer>
    <experiments>6</experiments>
</comment>
<comment type="interaction">
    <interactant intactId="EBI-10171774">
        <id>P60410</id>
    </interactant>
    <interactant intactId="EBI-2256865">
        <id>P35590</id>
        <label>TIE1</label>
    </interactant>
    <organismsDiffer>false</organismsDiffer>
    <experiments>3</experiments>
</comment>
<comment type="interaction">
    <interactant intactId="EBI-10171774">
        <id>P60410</id>
    </interactant>
    <interactant intactId="EBI-717810">
        <id>Q08117</id>
        <label>TLE5</label>
    </interactant>
    <organismsDiffer>false</organismsDiffer>
    <experiments>3</experiments>
</comment>
<comment type="interaction">
    <interactant intactId="EBI-10171774">
        <id>P60410</id>
    </interactant>
    <interactant intactId="EBI-11741437">
        <id>Q08117-2</id>
        <label>TLE5</label>
    </interactant>
    <organismsDiffer>false</organismsDiffer>
    <experiments>3</experiments>
</comment>
<comment type="interaction">
    <interactant intactId="EBI-10171774">
        <id>P60410</id>
    </interactant>
    <interactant intactId="EBI-2844246">
        <id>Q9NV12</id>
        <label>TMEM140</label>
    </interactant>
    <organismsDiffer>false</organismsDiffer>
    <experiments>3</experiments>
</comment>
<comment type="interaction">
    <interactant intactId="EBI-10171774">
        <id>P60410</id>
    </interactant>
    <interactant intactId="EBI-2799342">
        <id>Q86TG1</id>
        <label>TMEM150A</label>
    </interactant>
    <organismsDiffer>false</organismsDiffer>
    <experiments>3</experiments>
</comment>
<comment type="interaction">
    <interactant intactId="EBI-10171774">
        <id>P60410</id>
    </interactant>
    <interactant intactId="EBI-2509913">
        <id>Q96KP6</id>
        <label>TNIP3</label>
    </interactant>
    <organismsDiffer>false</organismsDiffer>
    <experiments>3</experiments>
</comment>
<comment type="interaction">
    <interactant intactId="EBI-10171774">
        <id>P60410</id>
    </interactant>
    <interactant intactId="EBI-12039775">
        <id>Q05952</id>
        <label>TNP2</label>
    </interactant>
    <organismsDiffer>false</organismsDiffer>
    <experiments>3</experiments>
</comment>
<comment type="interaction">
    <interactant intactId="EBI-10171774">
        <id>P60410</id>
    </interactant>
    <interactant intactId="EBI-10241829">
        <id>Q4VB56</id>
        <label>TNP2</label>
    </interactant>
    <organismsDiffer>false</organismsDiffer>
    <experiments>3</experiments>
</comment>
<comment type="interaction">
    <interactant intactId="EBI-10171774">
        <id>P60410</id>
    </interactant>
    <interactant intactId="EBI-1042571">
        <id>Q9Y5L0</id>
        <label>TNPO3</label>
    </interactant>
    <organismsDiffer>false</organismsDiffer>
    <experiments>3</experiments>
</comment>
<comment type="interaction">
    <interactant intactId="EBI-10171774">
        <id>P60410</id>
    </interactant>
    <interactant intactId="EBI-949753">
        <id>Q63HR2</id>
        <label>TNS2</label>
    </interactant>
    <organismsDiffer>false</organismsDiffer>
    <experiments>3</experiments>
</comment>
<comment type="interaction">
    <interactant intactId="EBI-10171774">
        <id>P60410</id>
    </interactant>
    <interactant intactId="EBI-725997">
        <id>Q8WV44</id>
        <label>TRIM41</label>
    </interactant>
    <organismsDiffer>false</organismsDiffer>
    <experiments>3</experiments>
</comment>
<comment type="interaction">
    <interactant intactId="EBI-10171774">
        <id>P60410</id>
    </interactant>
    <interactant intactId="EBI-5235829">
        <id>Q8IWZ5</id>
        <label>TRIM42</label>
    </interactant>
    <organismsDiffer>false</organismsDiffer>
    <experiments>3</experiments>
</comment>
<comment type="interaction">
    <interactant intactId="EBI-10171774">
        <id>P60410</id>
    </interactant>
    <interactant intactId="EBI-8652667">
        <id>O14817</id>
        <label>TSPAN4</label>
    </interactant>
    <organismsDiffer>false</organismsDiffer>
    <experiments>3</experiments>
</comment>
<comment type="interaction">
    <interactant intactId="EBI-10171774">
        <id>P60410</id>
    </interactant>
    <interactant intactId="EBI-9090990">
        <id>Q5W5X9-3</id>
        <label>TTC23</label>
    </interactant>
    <organismsDiffer>false</organismsDiffer>
    <experiments>3</experiments>
</comment>
<comment type="interaction">
    <interactant intactId="EBI-10171774">
        <id>P60410</id>
    </interactant>
    <interactant intactId="EBI-2825190">
        <id>Q86UY0</id>
        <label>TXNDC5</label>
    </interactant>
    <organismsDiffer>false</organismsDiffer>
    <experiments>3</experiments>
</comment>
<comment type="interaction">
    <interactant intactId="EBI-10171774">
        <id>P60410</id>
    </interactant>
    <interactant intactId="EBI-742060">
        <id>Q8TAI1</id>
        <label>TYMSOS</label>
    </interactant>
    <organismsDiffer>false</organismsDiffer>
    <experiments>3</experiments>
</comment>
<comment type="interaction">
    <interactant intactId="EBI-10171774">
        <id>P60410</id>
    </interactant>
    <interactant intactId="EBI-3951628">
        <id>Q06418</id>
        <label>TYRO3</label>
    </interactant>
    <organismsDiffer>false</organismsDiffer>
    <experiments>3</experiments>
</comment>
<comment type="interaction">
    <interactant intactId="EBI-10171774">
        <id>P60410</id>
    </interactant>
    <interactant intactId="EBI-607755">
        <id>Q9BZL1</id>
        <label>UBL5</label>
    </interactant>
    <organismsDiffer>false</organismsDiffer>
    <experiments>3</experiments>
</comment>
<comment type="interaction">
    <interactant intactId="EBI-10171774">
        <id>P60410</id>
    </interactant>
    <interactant intactId="EBI-5457544">
        <id>Q9BRU9</id>
        <label>UTP23</label>
    </interactant>
    <organismsDiffer>false</organismsDiffer>
    <experiments>6</experiments>
</comment>
<comment type="interaction">
    <interactant intactId="EBI-10171774">
        <id>P60410</id>
    </interactant>
    <interactant intactId="EBI-357355">
        <id>Q9UBK9</id>
        <label>UXT</label>
    </interactant>
    <organismsDiffer>false</organismsDiffer>
    <experiments>6</experiments>
</comment>
<comment type="interaction">
    <interactant intactId="EBI-10171774">
        <id>P60410</id>
    </interactant>
    <interactant intactId="EBI-10249550">
        <id>Q6EMK4</id>
        <label>VASN</label>
    </interactant>
    <organismsDiffer>false</organismsDiffer>
    <experiments>3</experiments>
</comment>
<comment type="interaction">
    <interactant intactId="EBI-10171774">
        <id>P60410</id>
    </interactant>
    <interactant intactId="EBI-10191303">
        <id>O95231</id>
        <label>VENTX</label>
    </interactant>
    <organismsDiffer>false</organismsDiffer>
    <experiments>3</experiments>
</comment>
<comment type="interaction">
    <interactant intactId="EBI-10171774">
        <id>P60410</id>
    </interactant>
    <interactant intactId="EBI-11980193">
        <id>Q14119</id>
        <label>VEZF1</label>
    </interactant>
    <organismsDiffer>false</organismsDiffer>
    <experiments>3</experiments>
</comment>
<comment type="interaction">
    <interactant intactId="EBI-10171774">
        <id>P60410</id>
    </interactant>
    <interactant intactId="EBI-11957216">
        <id>A8MV65-2</id>
        <label>VGLL3</label>
    </interactant>
    <organismsDiffer>false</organismsDiffer>
    <experiments>3</experiments>
</comment>
<comment type="interaction">
    <interactant intactId="EBI-10171774">
        <id>P60410</id>
    </interactant>
    <interactant intactId="EBI-373380">
        <id>Q9H270</id>
        <label>VPS11</label>
    </interactant>
    <organismsDiffer>false</organismsDiffer>
    <experiments>6</experiments>
</comment>
<comment type="interaction">
    <interactant intactId="EBI-10171774">
        <id>P60410</id>
    </interactant>
    <interactant intactId="EBI-11957238">
        <id>Q2TAL6</id>
        <label>VWC2</label>
    </interactant>
    <organismsDiffer>false</organismsDiffer>
    <experiments>3</experiments>
</comment>
<comment type="interaction">
    <interactant intactId="EBI-10171774">
        <id>P60410</id>
    </interactant>
    <interactant intactId="EBI-11747707">
        <id>B2RUY7</id>
        <label>VWC2L</label>
    </interactant>
    <organismsDiffer>false</organismsDiffer>
    <experiments>3</experiments>
</comment>
<comment type="interaction">
    <interactant intactId="EBI-10171774">
        <id>P60410</id>
    </interactant>
    <interactant intactId="EBI-3922719">
        <id>Q9Y5W5</id>
        <label>WIF1</label>
    </interactant>
    <organismsDiffer>false</organismsDiffer>
    <experiments>6</experiments>
</comment>
<comment type="interaction">
    <interactant intactId="EBI-10171774">
        <id>P60410</id>
    </interactant>
    <interactant intactId="EBI-8058160">
        <id>O96014</id>
        <label>WNT11</label>
    </interactant>
    <organismsDiffer>false</organismsDiffer>
    <experiments>3</experiments>
</comment>
<comment type="interaction">
    <interactant intactId="EBI-10171774">
        <id>P60410</id>
    </interactant>
    <interactant intactId="EBI-2320534">
        <id>P19544</id>
        <label>WT1</label>
    </interactant>
    <organismsDiffer>false</organismsDiffer>
    <experiments>3</experiments>
</comment>
<comment type="interaction">
    <interactant intactId="EBI-10171774">
        <id>P60410</id>
    </interactant>
    <interactant intactId="EBI-10223946">
        <id>Q06250</id>
        <label>WT1-AS</label>
    </interactant>
    <organismsDiffer>false</organismsDiffer>
    <experiments>3</experiments>
</comment>
<comment type="interaction">
    <interactant intactId="EBI-10171774">
        <id>P60410</id>
    </interactant>
    <interactant intactId="EBI-743787">
        <id>Q9GZM5</id>
        <label>YIPF3</label>
    </interactant>
    <organismsDiffer>false</organismsDiffer>
    <experiments>3</experiments>
</comment>
<comment type="interaction">
    <interactant intactId="EBI-10171774">
        <id>P60410</id>
    </interactant>
    <interactant intactId="EBI-765538">
        <id>P25490</id>
        <label>YY1</label>
    </interactant>
    <organismsDiffer>false</organismsDiffer>
    <experiments>3</experiments>
</comment>
<comment type="interaction">
    <interactant intactId="EBI-10171774">
        <id>P60410</id>
    </interactant>
    <interactant intactId="EBI-744471">
        <id>O43167</id>
        <label>ZBTB24</label>
    </interactant>
    <organismsDiffer>false</organismsDiffer>
    <experiments>6</experiments>
</comment>
<comment type="interaction">
    <interactant intactId="EBI-10171774">
        <id>P60410</id>
    </interactant>
    <interactant intactId="EBI-739899">
        <id>P24278</id>
        <label>ZBTB25</label>
    </interactant>
    <organismsDiffer>false</organismsDiffer>
    <experiments>3</experiments>
</comment>
<comment type="interaction">
    <interactant intactId="EBI-10171774">
        <id>P60410</id>
    </interactant>
    <interactant intactId="EBI-2818796">
        <id>Q8WTX9</id>
        <label>ZDHHC1</label>
    </interactant>
    <organismsDiffer>false</organismsDiffer>
    <experiments>3</experiments>
</comment>
<comment type="interaction">
    <interactant intactId="EBI-10171774">
        <id>P60410</id>
    </interactant>
    <interactant intactId="EBI-750052">
        <id>Q9Y260</id>
        <label>ZFAB</label>
    </interactant>
    <organismsDiffer>false</organismsDiffer>
    <experiments>3</experiments>
</comment>
<comment type="interaction">
    <interactant intactId="EBI-10171774">
        <id>P60410</id>
    </interactant>
    <interactant intactId="EBI-2849569">
        <id>Q9BQ24</id>
        <label>ZFYVE21</label>
    </interactant>
    <organismsDiffer>false</organismsDiffer>
    <experiments>3</experiments>
</comment>
<comment type="interaction">
    <interactant intactId="EBI-10171774">
        <id>P60410</id>
    </interactant>
    <interactant intactId="EBI-11963196">
        <id>Q15915</id>
        <label>ZIC1</label>
    </interactant>
    <organismsDiffer>false</organismsDiffer>
    <experiments>3</experiments>
</comment>
<comment type="interaction">
    <interactant intactId="EBI-10171774">
        <id>P60410</id>
    </interactant>
    <interactant intactId="EBI-5278328">
        <id>Q8IZC7</id>
        <label>ZNF101</label>
    </interactant>
    <organismsDiffer>false</organismsDiffer>
    <experiments>3</experiments>
</comment>
<comment type="interaction">
    <interactant intactId="EBI-10171774">
        <id>P60410</id>
    </interactant>
    <interactant intactId="EBI-7234993">
        <id>Q9UII5</id>
        <label>ZNF107</label>
    </interactant>
    <organismsDiffer>false</organismsDiffer>
    <experiments>3</experiments>
</comment>
<comment type="interaction">
    <interactant intactId="EBI-10171774">
        <id>P60410</id>
    </interactant>
    <interactant intactId="EBI-1228269">
        <id>P58317</id>
        <label>ZNF121</label>
    </interactant>
    <organismsDiffer>false</organismsDiffer>
    <experiments>3</experiments>
</comment>
<comment type="interaction">
    <interactant intactId="EBI-10171774">
        <id>P60410</id>
    </interactant>
    <interactant intactId="EBI-2555767">
        <id>Q15973</id>
        <label>ZNF124</label>
    </interactant>
    <organismsDiffer>false</organismsDiffer>
    <experiments>6</experiments>
</comment>
<comment type="interaction">
    <interactant intactId="EBI-10171774">
        <id>P60410</id>
    </interactant>
    <interactant intactId="EBI-10746567">
        <id>P52744</id>
        <label>ZNF138</label>
    </interactant>
    <organismsDiffer>false</organismsDiffer>
    <experiments>3</experiments>
</comment>
<comment type="interaction">
    <interactant intactId="EBI-10171774">
        <id>P60410</id>
    </interactant>
    <interactant intactId="EBI-10213071">
        <id>P52744-2</id>
        <label>ZNF138</label>
    </interactant>
    <organismsDiffer>false</organismsDiffer>
    <experiments>3</experiments>
</comment>
<comment type="interaction">
    <interactant intactId="EBI-10171774">
        <id>P60410</id>
    </interactant>
    <interactant intactId="EBI-741694">
        <id>P49910</id>
        <label>ZNF165</label>
    </interactant>
    <organismsDiffer>false</organismsDiffer>
    <experiments>3</experiments>
</comment>
<comment type="interaction">
    <interactant intactId="EBI-10171774">
        <id>P60410</id>
    </interactant>
    <interactant intactId="EBI-717634">
        <id>P17024</id>
        <label>ZNF20</label>
    </interactant>
    <organismsDiffer>false</organismsDiffer>
    <experiments>6</experiments>
</comment>
<comment type="interaction">
    <interactant intactId="EBI-10171774">
        <id>P60410</id>
    </interactant>
    <interactant intactId="EBI-5657766">
        <id>P17027</id>
        <label>ZNF23</label>
    </interactant>
    <organismsDiffer>false</organismsDiffer>
    <experiments>3</experiments>
</comment>
<comment type="interaction">
    <interactant intactId="EBI-10171774">
        <id>P60410</id>
    </interactant>
    <interactant intactId="EBI-10177272">
        <id>P15622-3</id>
        <label>ZNF250</label>
    </interactant>
    <organismsDiffer>false</organismsDiffer>
    <experiments>3</experiments>
</comment>
<comment type="interaction">
    <interactant intactId="EBI-10171774">
        <id>P60410</id>
    </interactant>
    <interactant intactId="EBI-4395808">
        <id>O43296</id>
        <label>ZNF264</label>
    </interactant>
    <organismsDiffer>false</organismsDiffer>
    <experiments>3</experiments>
</comment>
<comment type="interaction">
    <interactant intactId="EBI-10171774">
        <id>P60410</id>
    </interactant>
    <interactant intactId="EBI-7115319">
        <id>Q14584</id>
        <label>ZNF266</label>
    </interactant>
    <organismsDiffer>false</organismsDiffer>
    <experiments>3</experiments>
</comment>
<comment type="interaction">
    <interactant intactId="EBI-10171774">
        <id>P60410</id>
    </interactant>
    <interactant intactId="EBI-11993110">
        <id>Q9P2F9</id>
        <label>ZNF319</label>
    </interactant>
    <organismsDiffer>false</organismsDiffer>
    <experiments>3</experiments>
</comment>
<comment type="interaction">
    <interactant intactId="EBI-10171774">
        <id>P60410</id>
    </interactant>
    <interactant intactId="EBI-1965483">
        <id>P17041</id>
        <label>ZNF32</label>
    </interactant>
    <organismsDiffer>false</organismsDiffer>
    <experiments>3</experiments>
</comment>
<comment type="interaction">
    <interactant intactId="EBI-10171774">
        <id>P60410</id>
    </interactant>
    <interactant intactId="EBI-373456">
        <id>Q9Y3S2</id>
        <label>ZNF330</label>
    </interactant>
    <organismsDiffer>false</organismsDiffer>
    <experiments>3</experiments>
</comment>
<comment type="interaction">
    <interactant intactId="EBI-10171774">
        <id>P60410</id>
    </interactant>
    <interactant intactId="EBI-347633">
        <id>Q9H9D4</id>
        <label>ZNF408</label>
    </interactant>
    <organismsDiffer>false</organismsDiffer>
    <experiments>3</experiments>
</comment>
<comment type="interaction">
    <interactant intactId="EBI-10171774">
        <id>P60410</id>
    </interactant>
    <interactant intactId="EBI-744257">
        <id>Q96IQ9</id>
        <label>ZNF414</label>
    </interactant>
    <organismsDiffer>false</organismsDiffer>
    <experiments>3</experiments>
</comment>
<comment type="interaction">
    <interactant intactId="EBI-10171774">
        <id>P60410</id>
    </interactant>
    <interactant intactId="EBI-740727">
        <id>Q8TAU3</id>
        <label>ZNF417</label>
    </interactant>
    <organismsDiffer>false</organismsDiffer>
    <experiments>6</experiments>
</comment>
<comment type="interaction">
    <interactant intactId="EBI-10171774">
        <id>P60410</id>
    </interactant>
    <interactant intactId="EBI-747580">
        <id>Q8NDP4</id>
        <label>ZNF439</label>
    </interactant>
    <organismsDiffer>false</organismsDiffer>
    <experiments>6</experiments>
</comment>
<comment type="interaction">
    <interactant intactId="EBI-10171774">
        <id>P60410</id>
    </interactant>
    <interactant intactId="EBI-726439">
        <id>Q8IYI8</id>
        <label>ZNF440</label>
    </interactant>
    <organismsDiffer>false</organismsDiffer>
    <experiments>3</experiments>
</comment>
<comment type="interaction">
    <interactant intactId="EBI-10171774">
        <id>P60410</id>
    </interactant>
    <interactant intactId="EBI-12010736">
        <id>Q8N0Y2-2</id>
        <label>ZNF444</label>
    </interactant>
    <organismsDiffer>false</organismsDiffer>
    <experiments>3</experiments>
</comment>
<comment type="interaction">
    <interactant intactId="EBI-10171774">
        <id>P60410</id>
    </interactant>
    <interactant intactId="EBI-751409">
        <id>Q8WTR7</id>
        <label>ZNF473</label>
    </interactant>
    <organismsDiffer>false</organismsDiffer>
    <experiments>6</experiments>
</comment>
<comment type="interaction">
    <interactant intactId="EBI-10171774">
        <id>P60410</id>
    </interactant>
    <interactant intactId="EBI-1105370">
        <id>Q9ULM2</id>
        <label>ZNF490</label>
    </interactant>
    <organismsDiffer>false</organismsDiffer>
    <experiments>3</experiments>
</comment>
<comment type="interaction">
    <interactant intactId="EBI-10171774">
        <id>P60410</id>
    </interactant>
    <interactant intactId="EBI-12019860">
        <id>Q8N8L2</id>
        <label>ZNF491</label>
    </interactant>
    <organismsDiffer>false</organismsDiffer>
    <experiments>3</experiments>
</comment>
<comment type="interaction">
    <interactant intactId="EBI-10171774">
        <id>P60410</id>
    </interactant>
    <interactant intactId="EBI-10486136">
        <id>Q6ZNH5</id>
        <label>ZNF497</label>
    </interactant>
    <organismsDiffer>false</organismsDiffer>
    <experiments>3</experiments>
</comment>
<comment type="interaction">
    <interactant intactId="EBI-10171774">
        <id>P60410</id>
    </interactant>
    <interactant intactId="EBI-10283126">
        <id>Q96C55</id>
        <label>ZNF524</label>
    </interactant>
    <organismsDiffer>false</organismsDiffer>
    <experiments>3</experiments>
</comment>
<comment type="interaction">
    <interactant intactId="EBI-10171774">
        <id>P60410</id>
    </interactant>
    <interactant intactId="EBI-746605">
        <id>Q9BR84</id>
        <label>ZNF559</label>
    </interactant>
    <organismsDiffer>false</organismsDiffer>
    <experiments>3</experiments>
</comment>
<comment type="interaction">
    <interactant intactId="EBI-10171774">
        <id>P60410</id>
    </interactant>
    <interactant intactId="EBI-10172590">
        <id>Q7Z3I7</id>
        <label>ZNF572</label>
    </interactant>
    <organismsDiffer>false</organismsDiffer>
    <experiments>9</experiments>
</comment>
<comment type="interaction">
    <interactant intactId="EBI-10171774">
        <id>P60410</id>
    </interactant>
    <interactant intactId="EBI-14069183">
        <id>Q86XF7</id>
        <label>ZNF575</label>
    </interactant>
    <organismsDiffer>false</organismsDiffer>
    <experiments>3</experiments>
</comment>
<comment type="interaction">
    <interactant intactId="EBI-10171774">
        <id>P60410</id>
    </interactant>
    <interactant intactId="EBI-10241108">
        <id>Q3MI94</id>
        <label>ZNF578</label>
    </interactant>
    <organismsDiffer>false</organismsDiffer>
    <experiments>3</experiments>
</comment>
<comment type="interaction">
    <interactant intactId="EBI-10171774">
        <id>P60410</id>
    </interactant>
    <interactant intactId="EBI-11955189">
        <id>Q96N58</id>
        <label>ZNF578</label>
    </interactant>
    <organismsDiffer>false</organismsDiffer>
    <experiments>3</experiments>
</comment>
<comment type="interaction">
    <interactant intactId="EBI-10171774">
        <id>P60410</id>
    </interactant>
    <interactant intactId="EBI-746277">
        <id>Q9UK33</id>
        <label>ZNF580</label>
    </interactant>
    <organismsDiffer>false</organismsDiffer>
    <experiments>3</experiments>
</comment>
<comment type="interaction">
    <interactant intactId="EBI-10171774">
        <id>P60410</id>
    </interactant>
    <interactant intactId="EBI-745520">
        <id>Q9P0T4</id>
        <label>ZNF581</label>
    </interactant>
    <organismsDiffer>false</organismsDiffer>
    <experiments>3</experiments>
</comment>
<comment type="interaction">
    <interactant intactId="EBI-10171774">
        <id>P60410</id>
    </interactant>
    <interactant intactId="EBI-6427977">
        <id>Q96SQ5</id>
        <label>ZNF587</label>
    </interactant>
    <organismsDiffer>false</organismsDiffer>
    <experiments>6</experiments>
</comment>
<comment type="interaction">
    <interactant intactId="EBI-10171774">
        <id>P60410</id>
    </interactant>
    <interactant intactId="EBI-12038525">
        <id>Q96I27-2</id>
        <label>ZNF625</label>
    </interactant>
    <organismsDiffer>false</organismsDiffer>
    <experiments>3</experiments>
</comment>
<comment type="interaction">
    <interactant intactId="EBI-10171774">
        <id>P60410</id>
    </interactant>
    <interactant intactId="EBI-11985915">
        <id>Q5T619</id>
        <label>ZNF648</label>
    </interactant>
    <organismsDiffer>false</organismsDiffer>
    <experiments>3</experiments>
</comment>
<comment type="interaction">
    <interactant intactId="EBI-10171774">
        <id>P60410</id>
    </interactant>
    <interactant intactId="EBI-12006574">
        <id>Q96BR6</id>
        <label>ZNF669</label>
    </interactant>
    <organismsDiffer>false</organismsDiffer>
    <experiments>3</experiments>
</comment>
<comment type="interaction">
    <interactant intactId="EBI-10171774">
        <id>P60410</id>
    </interactant>
    <interactant intactId="EBI-11090299">
        <id>Q9H7X3</id>
        <label>ZNF696</label>
    </interactant>
    <organismsDiffer>false</organismsDiffer>
    <experiments>3</experiments>
</comment>
<comment type="interaction">
    <interactant intactId="EBI-10171774">
        <id>P60410</id>
    </interactant>
    <interactant intactId="EBI-10265733">
        <id>Q8N508</id>
        <label>ZNF697</label>
    </interactant>
    <organismsDiffer>false</organismsDiffer>
    <experiments>3</experiments>
</comment>
<comment type="interaction">
    <interactant intactId="EBI-10171774">
        <id>P60410</id>
    </interactant>
    <interactant intactId="EBI-7149881">
        <id>Q96BV0</id>
        <label>ZNF775</label>
    </interactant>
    <organismsDiffer>false</organismsDiffer>
    <experiments>3</experiments>
</comment>
<comment type="interaction">
    <interactant intactId="EBI-10171774">
        <id>P60410</id>
    </interactant>
    <interactant intactId="EBI-10265203">
        <id>Q8N393</id>
        <label>ZNF786</label>
    </interactant>
    <organismsDiffer>false</organismsDiffer>
    <experiments>3</experiments>
</comment>
<comment type="interaction">
    <interactant intactId="EBI-10171774">
        <id>P60410</id>
    </interactant>
    <interactant intactId="EBI-10237274">
        <id>Q15937</id>
        <label>ZNF79</label>
    </interactant>
    <organismsDiffer>false</organismsDiffer>
    <experiments>3</experiments>
</comment>
<comment type="interaction">
    <interactant intactId="EBI-10171774">
        <id>P60410</id>
    </interactant>
    <interactant intactId="EBI-10240849">
        <id>Q3KQV3</id>
        <label>ZNF792</label>
    </interactant>
    <organismsDiffer>false</organismsDiffer>
    <experiments>3</experiments>
</comment>
<comment type="interaction">
    <interactant intactId="EBI-10171774">
        <id>P60410</id>
    </interactant>
    <interactant intactId="EBI-11962574">
        <id>Q96EG3</id>
        <label>ZNF837</label>
    </interactant>
    <organismsDiffer>false</organismsDiffer>
    <experiments>3</experiments>
</comment>
<comment type="interaction">
    <interactant intactId="EBI-10171774">
        <id>P60410</id>
    </interactant>
    <interactant intactId="EBI-1210440">
        <id>O43309</id>
        <label>ZSCAN12</label>
    </interactant>
    <organismsDiffer>false</organismsDiffer>
    <experiments>3</experiments>
</comment>
<comment type="interaction">
    <interactant intactId="EBI-10171774">
        <id>P60410</id>
    </interactant>
    <interactant intactId="EBI-10281938">
        <id>Q9Y5A6</id>
        <label>ZSCAN21</label>
    </interactant>
    <organismsDiffer>false</organismsDiffer>
    <experiments>6</experiments>
</comment>
<comment type="interaction">
    <interactant intactId="EBI-10171774">
        <id>P60410</id>
    </interactant>
    <interactant intactId="EBI-10211777">
        <id>A0A384ME25</id>
    </interactant>
    <organismsDiffer>false</organismsDiffer>
    <experiments>6</experiments>
</comment>
<comment type="interaction">
    <interactant intactId="EBI-10171774">
        <id>P60410</id>
    </interactant>
    <interactant intactId="EBI-10243533">
        <id>Q5BKY6</id>
    </interactant>
    <organismsDiffer>false</organismsDiffer>
    <experiments>3</experiments>
</comment>
<comment type="interaction">
    <interactant intactId="EBI-10171774">
        <id>P60410</id>
    </interactant>
    <interactant intactId="EBI-10248413">
        <id>Q5XG85</id>
    </interactant>
    <organismsDiffer>false</organismsDiffer>
    <experiments>3</experiments>
</comment>
<comment type="interaction">
    <interactant intactId="EBI-10171774">
        <id>P60410</id>
    </interactant>
    <interactant intactId="EBI-10255586">
        <id>Q6ZVW3</id>
    </interactant>
    <organismsDiffer>false</organismsDiffer>
    <experiments>3</experiments>
</comment>
<comment type="interaction">
    <interactant intactId="EBI-10171774">
        <id>P60410</id>
    </interactant>
    <interactant intactId="EBI-10315054">
        <id>Q9NWL9</id>
    </interactant>
    <organismsDiffer>false</organismsDiffer>
    <experiments>3</experiments>
</comment>
<comment type="tissue specificity">
    <text evidence="1 2">Restricted to a narrow region of the hair fiber cuticle, lying approximately 20 cell layers above the apex of the dermal papilla of the hair root; not detected in any other tissues.</text>
</comment>
<comment type="similarity">
    <text evidence="5">Belongs to the KRTAP type 10 family.</text>
</comment>
<proteinExistence type="evidence at protein level"/>
<protein>
    <recommendedName>
        <fullName>Keratin-associated protein 10-8</fullName>
    </recommendedName>
    <alternativeName>
        <fullName>High sulfur keratin-associated protein 10.8</fullName>
    </alternativeName>
    <alternativeName>
        <fullName>Keratin-associated protein 10.8</fullName>
    </alternativeName>
    <alternativeName>
        <fullName>Keratin-associated protein 18-8</fullName>
    </alternativeName>
    <alternativeName>
        <fullName>Keratin-associated protein 18.8</fullName>
    </alternativeName>
</protein>
<sequence length="259" mass="26299">MADACCTRTYVIAASTMSVCSSDVGHVSRVSSPSTCTGSSWQVDNCQESCCEPRSCASSCCTPSCCAPAPCLALVCAPVSCEPSPCQSGCTDSCTPSCCQQSSCQPACCTSSPCQQACCVPVCCKSNCCKPVCCVSICSGASSPCCQQSSCQSACCTFSPCQQACCVPICCKPICCVPVCSGASSLCCQKSSCQPACCTTSCCRPSSSVSLLCRPVCRPACCVPVPSCCVPASSCQPSCCHPASCLSFLCRPACSRLAC</sequence>
<evidence type="ECO:0000269" key="1">
    <source>
    </source>
</evidence>
<evidence type="ECO:0000269" key="2">
    <source>
    </source>
</evidence>
<evidence type="ECO:0000269" key="3">
    <source>
    </source>
</evidence>
<evidence type="ECO:0000269" key="4">
    <source>
    </source>
</evidence>
<evidence type="ECO:0000305" key="5"/>
<gene>
    <name type="primary">KRTAP10-8</name>
    <name type="synonym">KAP10.8</name>
    <name type="synonym">KAP18-8</name>
    <name type="synonym">KRTAP10.8</name>
    <name type="synonym">KRTAP18-8</name>
    <name type="synonym">KRTAP18.8</name>
</gene>